<reference key="1">
    <citation type="journal article" date="1991" name="Science">
        <title>Isolation of a rel-related human cDNA that potentially encodes the 65-kD subunit of NF-kappa B.</title>
        <authorList>
            <person name="Ruben S.M."/>
            <person name="Dillon P.J."/>
            <person name="Schreck R."/>
            <person name="Henkel T."/>
            <person name="Chen C.-H."/>
            <person name="Maher M."/>
            <person name="Baeuerle P.A."/>
            <person name="Rosen C.A."/>
        </authorList>
    </citation>
    <scope>NUCLEOTIDE SEQUENCE [MRNA] (ISOFORM 1)</scope>
</reference>
<reference key="2">
    <citation type="journal article" date="1993" name="Hum. Mol. Genet.">
        <title>Genomic organization of the gene encoding the p65 subunit of NF-kappa B: multiple variants of the p65 protein may be generated by alternative splicing.</title>
        <authorList>
            <person name="Deloukas P."/>
            <person name="van Loon A.P.G.M."/>
        </authorList>
    </citation>
    <scope>NUCLEOTIDE SEQUENCE [GENOMIC DNA]</scope>
    <scope>ALTERNATIVE SPLICING</scope>
</reference>
<reference key="3">
    <citation type="journal article" date="1994" name="Gene">
        <title>An alternatively spliced transcript, p65 delta 2, of the gene encoding the p65 subunit of the transcription factor NF-kappa B.</title>
        <authorList>
            <person name="Lyle R."/>
            <person name="Valleley E.M."/>
            <person name="Sharpe P.T."/>
            <person name="Hewitt J.E."/>
        </authorList>
    </citation>
    <scope>NUCLEOTIDE SEQUENCE [MRNA] (ISOFORM 2)</scope>
    <source>
        <tissue>Bone</tissue>
    </source>
</reference>
<reference key="4">
    <citation type="journal article" date="2004" name="Genome Res.">
        <title>The status, quality, and expansion of the NIH full-length cDNA project: the Mammalian Gene Collection (MGC).</title>
        <authorList>
            <consortium name="The MGC Project Team"/>
        </authorList>
    </citation>
    <scope>NUCLEOTIDE SEQUENCE [LARGE SCALE MRNA] (ISOFORM 4)</scope>
    <source>
        <tissue>Colon</tissue>
    </source>
</reference>
<reference key="5">
    <citation type="submission" date="2003-10" db="EMBL/GenBank/DDBJ databases">
        <authorList>
            <consortium name="SeattleSNPs variation discovery resource"/>
        </authorList>
    </citation>
    <scope>NUCLEOTIDE SEQUENCE [GENOMIC DNA] OF 4-551</scope>
</reference>
<reference key="6">
    <citation type="journal article" date="1992" name="Mol. Cell. Biol.">
        <title>Functional characterization of the NF-kappa B p65 transcriptional activator and an alternatively spliced derivative.</title>
        <authorList>
            <person name="Ruben S.M."/>
            <person name="Narayanan R."/>
            <person name="Klement J.F."/>
            <person name="Chen C.-H."/>
            <person name="Rosen C.A."/>
        </authorList>
    </citation>
    <scope>NUCLEOTIDE SEQUENCE [MRNA] OF 214-239 (ISOFORMS 1/2 AND 3)</scope>
    <scope>REGION</scope>
</reference>
<reference key="7">
    <citation type="journal article" date="1992" name="EMBO J.">
        <title>A novel complex between the p65 subunit of NF-kappa B and c-Rel binds to a DNA element involved in the phorbol ester induction of the human urokinase gene.</title>
        <authorList>
            <person name="Hansen S.K."/>
            <person name="Nerlov C."/>
            <person name="Zabel U."/>
            <person name="Verde P."/>
            <person name="Johnsen M."/>
            <person name="Baeuerle P.A."/>
            <person name="Blasi F."/>
        </authorList>
    </citation>
    <scope>IDENTIFICATION IN THE NF-KAPPA-B P65-P50 COMPLEX</scope>
    <scope>IDENTIFICATION IN THE NF-KAPPA-B P65-C-REL COMPLEX</scope>
</reference>
<reference key="8">
    <citation type="journal article" date="1992" name="Mol. Biol. Cell">
        <title>I kappa B/MAD-3 masks the nuclear localization signal of NF-kappa B p65 and requires the transactivation domain to inhibit NF-kappa B p65 DNA binding.</title>
        <authorList>
            <person name="Ganchi P.A."/>
            <person name="Sun S.C."/>
            <person name="Greene W.C."/>
            <person name="Ballard D.W."/>
        </authorList>
    </citation>
    <scope>INTERACTION WITH NFKBIA</scope>
    <scope>SUBCELLULAR LOCATION</scope>
</reference>
<reference key="9">
    <citation type="journal article" date="1994" name="Oncogene">
        <title>Activation of multiple NF-kappa B/Rel DNA-binding complexes by tumor necrosis factor.</title>
        <authorList>
            <person name="Beg A.A."/>
            <person name="Baldwin A.S. Jr."/>
        </authorList>
    </citation>
    <scope>IDENTIFICATION IN THE NF-KAPPA-B P65-C-REL COMPLEX</scope>
    <scope>IDENTIFICATION IN THE NF-KAPPA-B P65-P52 COMPLEX</scope>
</reference>
<reference key="10">
    <citation type="journal article" date="1997" name="Cell Growth Differ.">
        <title>Regulation of intercellular adhesion molecule-1 gene by tumor necrosis factor-alpha is mediated by the nuclear factor-kappaB heterodimers p65/p65 and p65/c-Rel in the absence of p50.</title>
        <authorList>
            <person name="Aoudjit F."/>
            <person name="Brochu N."/>
            <person name="Belanger B."/>
            <person name="Stratowa C."/>
            <person name="Hiscott J."/>
            <person name="Audette M."/>
        </authorList>
    </citation>
    <scope>IDENTIFICATION IN THE NF-KAPPA-B P65-P65 COMPLEX</scope>
    <scope>IDENTIFICATION IN THE NF-KAPPA-B P65-C-REL COMPLEX</scope>
</reference>
<reference key="11">
    <citation type="journal article" date="1997" name="Mol. Cell. Biol.">
        <title>A new member of the IkappaB protein family, IkappaB epsilon, inhibits RelA (p65)-mediated NF-kappaB transcription.</title>
        <authorList>
            <person name="Li Z."/>
            <person name="Nabel G.J."/>
        </authorList>
    </citation>
    <scope>INTERACTION WITH NFKBIE</scope>
</reference>
<reference key="12">
    <citation type="journal article" date="1998" name="Nature">
        <title>IKAP is a scaffold protein of the IkappaB kinase complex.</title>
        <authorList>
            <person name="Cohen L."/>
            <person name="Henzel W.J."/>
            <person name="Baeuerle P.A."/>
        </authorList>
    </citation>
    <scope>IDENTIFICATION IN A COMPLEX WITH CHUK; IKBKB; NFKBIA; ELP1 AND MAP3K14</scope>
</reference>
<reference key="13">
    <citation type="journal article" date="1999" name="J. Biol. Chem.">
        <title>IkappaB kinases phosphorylate NF-kappaB p65 subunit on serine 536 in the transactivation domain.</title>
        <authorList>
            <person name="Sakurai H."/>
            <person name="Chiba H."/>
            <person name="Miyoshi H."/>
            <person name="Sugita T."/>
            <person name="Toriumi W."/>
        </authorList>
    </citation>
    <scope>PHOSPHORYLATION AT SER-536</scope>
</reference>
<reference key="14">
    <citation type="journal article" date="1999" name="Oncogene">
        <title>NF-kappaB subunit p65 binds to 53BP2 and inhibits cell death induced by 53BP2.</title>
        <authorList>
            <person name="Yang J.-P."/>
            <person name="Hori M."/>
            <person name="Takahashi N."/>
            <person name="Kawabe T."/>
            <person name="Kato H."/>
            <person name="Okamoto T."/>
        </authorList>
    </citation>
    <scope>TISSUE SPECIFICITY</scope>
    <scope>INTERACTION WITH TP53BP2</scope>
</reference>
<reference key="15">
    <citation type="journal article" date="2000" name="FASEB J.">
        <title>Yersinia enterocolitica invasin protein triggers IL-8 production in epithelial cells via activation of Rel p65-p65 homodimers.</title>
        <authorList>
            <person name="Schulte R."/>
            <person name="Grassl G.A."/>
            <person name="Preger S."/>
            <person name="Fessele S."/>
            <person name="Jacobi C.A."/>
            <person name="Schaller M."/>
            <person name="Nelson P.J."/>
            <person name="Autenrieth I.B."/>
        </authorList>
    </citation>
    <scope>FUNCTION</scope>
    <scope>IDENTIFICATION IN THE NF-KAPPA-B P65-P65 COMPLEX</scope>
</reference>
<reference key="16">
    <citation type="journal article" date="2000" name="J. Biol. Chem.">
        <title>Inhibition of nuclear factor-kappaB-mediated transcription by association with the amino-terminal enhancer of split, a Groucho-related protein lacking WD40 repeats.</title>
        <authorList>
            <person name="Tetsuka T."/>
            <person name="Uranishi H."/>
            <person name="Imai H."/>
            <person name="Ono T."/>
            <person name="Sonta S."/>
            <person name="Takahashi N."/>
            <person name="Asamitsu K."/>
            <person name="Okamoto T."/>
        </authorList>
    </citation>
    <scope>INTERACTION WITH TLE5 AND TLE1</scope>
</reference>
<reference key="17">
    <citation type="journal article" date="2000" name="J. Biol. Chem.">
        <title>Tumor necrosis factor alpha-induced phosphorylation of RelA/p65 on Ser529 is controlled by casein kinase II.</title>
        <authorList>
            <person name="Wang D."/>
            <person name="Westerheide S.D."/>
            <person name="Hanson J.L."/>
            <person name="Baldwin A.S. Jr."/>
        </authorList>
    </citation>
    <scope>PHOSPHORYLATION AT SER-529</scope>
</reference>
<reference key="18">
    <citation type="journal article" date="2001" name="Oncogene">
        <title>The tumor suppressor protein menin interacts with NF-kappaB proteins and inhibits NF-kappaB-mediated transactivation.</title>
        <authorList>
            <person name="Heppner C."/>
            <person name="Bilimoria K.Y."/>
            <person name="Agarwal S.K."/>
            <person name="Kester M."/>
            <person name="Whitty L.J."/>
            <person name="Guru S.C."/>
            <person name="Chandrasekharappa S.C."/>
            <person name="Collins F.S."/>
            <person name="Spiegel A.M."/>
            <person name="Marx S.J."/>
            <person name="Burns A.L."/>
        </authorList>
    </citation>
    <scope>INTERACTION WITH MEN1</scope>
</reference>
<reference key="19">
    <citation type="journal article" date="2001" name="Science">
        <title>Duration of nuclear NF-kappaB action regulated by reversible acetylation.</title>
        <authorList>
            <person name="Chen L.F."/>
            <person name="Fischle W."/>
            <person name="Verdin E."/>
            <person name="Greene W.C."/>
        </authorList>
    </citation>
    <scope>ACETYLATION</scope>
    <scope>INTERACTION WITH HDAC3</scope>
</reference>
<reference key="20">
    <citation type="journal article" date="2002" name="Cancer Cell">
        <title>A novel protein overexpressed in hepatoma accelerates export of NF-kappa B from the nucleus and inhibits p53-dependent apoptosis.</title>
        <authorList>
            <person name="Higashitsuji H."/>
            <person name="Higashitsuji H."/>
            <person name="Nagao T."/>
            <person name="Nonoguchi K."/>
            <person name="Fujii S."/>
            <person name="Itoh K."/>
            <person name="Fujita J."/>
        </authorList>
    </citation>
    <scope>INTERACTION WITH ETHE1</scope>
</reference>
<reference key="21">
    <citation type="journal article" date="2002" name="EMBO J.">
        <title>Acetylation of RelA at discrete sites regulates distinct nuclear functions of NF-kappaB.</title>
        <authorList>
            <person name="Chen L.F."/>
            <person name="Mu Y."/>
            <person name="Greene W.C."/>
        </authorList>
    </citation>
    <scope>ACETYLATION AT LYS-218; LYS-221 AND LYS-310</scope>
</reference>
<reference key="22">
    <citation type="journal article" date="2002" name="Mol. Cell">
        <title>The phosphorylation status of nuclear NF-kappa B determines its association with CBP/p300 or HDAC-1.</title>
        <authorList>
            <person name="Zhong H."/>
            <person name="May M.J."/>
            <person name="Jimi E."/>
            <person name="Ghosh S."/>
        </authorList>
    </citation>
    <scope>INTERACTION WITH CBP AND HDAC1</scope>
    <scope>PHOSPHORYLATION</scope>
</reference>
<reference key="23">
    <citation type="journal article" date="2003" name="EMBO J.">
        <title>Transcriptional activation of the NF-kappaB p65 subunit by mitogen- and stress-activated protein kinase-1 (MSK1).</title>
        <authorList>
            <person name="Vermeulen L."/>
            <person name="De Wilde G."/>
            <person name="Van Damme P."/>
            <person name="Vanden Berghe W."/>
            <person name="Haegeman G."/>
        </authorList>
    </citation>
    <scope>INTERACTION WITH RPS6KA5</scope>
    <scope>MUTAGENESIS OF SER-276</scope>
    <scope>PHOSPHORYLATION AT SER-276</scope>
</reference>
<reference key="24">
    <citation type="journal article" date="2003" name="J. Biol. Chem.">
        <title>Post-activation turn-off of NF-kappa B-dependent transcription is regulated by acetylation of p65.</title>
        <authorList>
            <person name="Kiernan R."/>
            <person name="Bres V."/>
            <person name="Ng R.W."/>
            <person name="Coudart M.-P."/>
            <person name="El Messaoudi S."/>
            <person name="Sardet C."/>
            <person name="Jin D.-Y."/>
            <person name="Emiliani S."/>
            <person name="Benkirane M."/>
        </authorList>
    </citation>
    <scope>ACETYLATION AT LYS-122 AND LYS-123</scope>
</reference>
<reference key="25">
    <citation type="journal article" date="2003" name="J. Biol. Chem.">
        <title>RING finger protein AO7 supports NF-kappaB-mediated transcription by interacting with the transactivation domain of the p65 subunit.</title>
        <authorList>
            <person name="Asamitsu K."/>
            <person name="Tetsuka T."/>
            <person name="Kanazawa S."/>
            <person name="Okamoto T."/>
        </authorList>
    </citation>
    <scope>FUNCTION</scope>
    <scope>SUBCELLULAR LOCATION</scope>
    <scope>INTERACTION WITH RNF25</scope>
</reference>
<reference key="26">
    <citation type="journal article" date="2003" name="J. Biol. Chem.">
        <title>Glycogen synthase kinase-3 beta regulates NF-kappa B1/p105 stability.</title>
        <authorList>
            <person name="Demarchi F."/>
            <person name="Bertoli C."/>
            <person name="Sandy P."/>
            <person name="Schneider C."/>
        </authorList>
    </citation>
    <scope>INTERACTION WITH GSK3B</scope>
</reference>
<reference key="27">
    <citation type="journal article" date="2003" name="Mol. Cell">
        <title>Regulation of NF-kappaB signaling by Pin1-dependent prolyl isomerization and ubiquitin-mediated proteolysis of p65/RelA.</title>
        <authorList>
            <person name="Ryo A."/>
            <person name="Suizu F."/>
            <person name="Yoshida Y."/>
            <person name="Perrem K."/>
            <person name="Liou Y.C."/>
            <person name="Wulf G."/>
            <person name="Rottapel R."/>
            <person name="Yamaoka S."/>
            <person name="Lu K.P."/>
        </authorList>
    </citation>
    <scope>PHOSPHORYLATION AT THR-254</scope>
    <scope>INTERACTION WITH PIN1 AND SOCS1</scope>
    <scope>MUTAGENESIS OF THR-254</scope>
</reference>
<reference key="28">
    <citation type="journal article" date="2004" name="Eur. J. Biochem.">
        <title>RNA helicase A interacts with nuclear factor kappaB p65 and functions as a transcriptional coactivator.</title>
        <authorList>
            <person name="Tetsuka T."/>
            <person name="Uranishi H."/>
            <person name="Sanda T."/>
            <person name="Asamitsu K."/>
            <person name="Yang J.-P."/>
            <person name="Wong-Staal F."/>
            <person name="Okamoto T."/>
        </authorList>
    </citation>
    <scope>INTERACTION WITH DHX9</scope>
</reference>
<reference key="29">
    <citation type="journal article" date="2004" name="J. Biol. Chem.">
        <title>Identification of a ZU5 and death domain-containing inhibitor of NF-kappaB.</title>
        <authorList>
            <person name="Zhang J."/>
            <person name="Xu L.-G."/>
            <person name="Han K.-J."/>
            <person name="Shu H.-B."/>
        </authorList>
    </citation>
    <scope>INTERACTION WITH UNC5CL</scope>
</reference>
<reference key="30">
    <citation type="journal article" date="2004" name="J. Biol. Chem.">
        <title>Suppression of MEK/ERK signaling pathway enhances cisplatin-induced NF-kappaB activation by protein phosphatase 4-mediated NF-kappaB p65 Thr dephosphorylation.</title>
        <authorList>
            <person name="Yeh P.Y."/>
            <person name="Yeh K.H."/>
            <person name="Chuang S.E."/>
            <person name="Song Y.C."/>
            <person name="Cheng A.L."/>
        </authorList>
    </citation>
    <scope>PHOSPHORYLATION AT THR-435</scope>
</reference>
<reference key="31">
    <citation type="journal article" date="2004" name="J. Exp. Med.">
        <title>Degradation of promoter-bound p65/RelA is essential for the prompt termination of the nuclear factor kappaB response.</title>
        <authorList>
            <person name="Saccani S."/>
            <person name="Marazzi I."/>
            <person name="Beg A.A."/>
            <person name="Natoli G."/>
        </authorList>
    </citation>
    <scope>UBIQUITINATION</scope>
</reference>
<reference key="32">
    <citation type="journal article" date="2004" name="Mol. Cell">
        <title>Identification of beta-arrestin2 as a G protein-coupled receptor-stimulated regulator of NF-kappaB pathways.</title>
        <authorList>
            <person name="Gao H."/>
            <person name="Sun Y."/>
            <person name="Wu Y."/>
            <person name="Luan B."/>
            <person name="Wang Y."/>
            <person name="Qu B."/>
            <person name="Pei G."/>
        </authorList>
    </citation>
    <scope>INTERACTION WITH ARRB2</scope>
</reference>
<reference key="33">
    <citation type="journal article" date="2004" name="Nature">
        <title>The candidate tumour suppressor protein ING4 regulates brain tumour growth and angiogenesis.</title>
        <authorList>
            <person name="Garkavtsev I."/>
            <person name="Kozin S.V."/>
            <person name="Chernova O."/>
            <person name="Xu L."/>
            <person name="Winkler F."/>
            <person name="Brown E."/>
            <person name="Barnett G.H."/>
            <person name="Jain R.K."/>
        </authorList>
    </citation>
    <scope>INTERACTION WITH ING4</scope>
</reference>
<reference key="34">
    <citation type="journal article" date="2005" name="EMBO J.">
        <title>Regulation of NF-kappaB and p53 through activation of ATR and Chk1 by the ARF tumour suppressor.</title>
        <authorList>
            <person name="Rocha S."/>
            <person name="Garrett M.D."/>
            <person name="Campbell K.J."/>
            <person name="Schumm K."/>
            <person name="Perkins N.D."/>
        </authorList>
    </citation>
    <scope>PHOSPHORYLATION AT THR-505</scope>
</reference>
<reference key="35">
    <citation type="journal article" date="2005" name="FASEB J.">
        <title>IKKbeta phosphorylates p65 at S468 in transactivation domain 2.</title>
        <authorList>
            <person name="Schwabe R.F."/>
            <person name="Sakurai H."/>
        </authorList>
    </citation>
    <scope>PHOSPHORYLATION AT SER-468</scope>
</reference>
<reference key="36">
    <citation type="journal article" date="2005" name="J. Biol. Chem.">
        <title>cis-acting, element-specific transcriptional activity of differentially phosphorylated nuclear factor-kappa B.</title>
        <authorList>
            <person name="Anrather J."/>
            <person name="Racchumi G."/>
            <person name="Iadecola C."/>
        </authorList>
    </citation>
    <scope>PHOSPHORYLATION AT SER-281</scope>
</reference>
<reference key="37">
    <citation type="journal article" date="2005" name="J. Biol. Chem.">
        <title>COMMD proteins, a novel family of structural and functional homologs of MURR1.</title>
        <authorList>
            <person name="Burstein E."/>
            <person name="Hoberg J.E."/>
            <person name="Wilkinson A.S."/>
            <person name="Rumble J.M."/>
            <person name="Csomos R.A."/>
            <person name="Komarck C.M."/>
            <person name="Maine G.N."/>
            <person name="Wilkinson J.C."/>
            <person name="Mayo M.W."/>
            <person name="Duckett C.S."/>
        </authorList>
    </citation>
    <scope>INTERACTION WITH COMMD1</scope>
    <scope>SUBCELLULAR LOCATION</scope>
</reference>
<reference key="38">
    <citation type="journal article" date="2005" name="Mol. Cell. Biol.">
        <title>NF-kappaB RelA phosphorylation regulates RelA acetylation.</title>
        <authorList>
            <person name="Chen L.F."/>
            <person name="Williams S.A."/>
            <person name="Mu Y."/>
            <person name="Nakano H."/>
            <person name="Duerr J.M."/>
            <person name="Buckbinder L."/>
            <person name="Greene W.C."/>
        </authorList>
    </citation>
    <scope>ACETYLATION AT LYS-310</scope>
</reference>
<reference key="39">
    <citation type="journal article" date="2005" name="Proc. Natl. Acad. Sci. U.S.A.">
        <title>Foxp3 interacts with nuclear factor of activated T cells and NF-kappa B to repress cytokine gene expression and effector functions of T helper cells.</title>
        <authorList>
            <person name="Bettelli E."/>
            <person name="Dastrange M."/>
            <person name="Oukka M."/>
        </authorList>
    </citation>
    <scope>FUNCTION</scope>
    <scope>INTERACTION WITH FOXP3</scope>
</reference>
<reference key="40">
    <citation type="journal article" date="2005" name="Virology">
        <title>Respiratory syncytial virus M2-1 protein induces the activation of nuclear factor kappa B.</title>
        <authorList>
            <person name="Reimers K."/>
            <person name="Buchholz K."/>
            <person name="Werchau H."/>
        </authorList>
    </citation>
    <scope>INTERACTION WITH HRSV PROTEIN M2-1 (MICROBIAL INFECTION)</scope>
</reference>
<reference key="41">
    <citation type="journal article" date="2006" name="Cancer Res.">
        <title>Activation of the nuclear factor kappaB pathway by astrocyte elevated gene-1: implications for tumor progression and metastasis.</title>
        <authorList>
            <person name="Emdad L."/>
            <person name="Sarkar D."/>
            <person name="Su Z.-Z."/>
            <person name="Randolph A."/>
            <person name="Boukerche H."/>
            <person name="Valerie K."/>
            <person name="Fisher P.B."/>
        </authorList>
    </citation>
    <scope>INTERACTION WITH MTDH</scope>
</reference>
<reference key="42">
    <citation type="journal article" date="2006" name="Cell. Signal.">
        <title>Human ubiquitin specific protease 31 is a deubiquitinating enzyme implicated in activation of nuclear factor-kappaB.</title>
        <authorList>
            <person name="Tzimas C."/>
            <person name="Michailidou G."/>
            <person name="Arsenakis M."/>
            <person name="Kieff E."/>
            <person name="Mosialos G."/>
            <person name="Hatzivassiliou E.G."/>
        </authorList>
    </citation>
    <scope>INTERACTION WITH USP48</scope>
</reference>
<reference key="43">
    <citation type="journal article" date="2006" name="J. Biol. Chem.">
        <title>Inducible phosphorylation of NF-kappa B p65 at serine 468 by T cell costimulation is mediated by IKK epsilon.</title>
        <authorList>
            <person name="Mattioli I."/>
            <person name="Geng H."/>
            <person name="Sebald A."/>
            <person name="Hodel M."/>
            <person name="Bucher C."/>
            <person name="Kracht M."/>
            <person name="Schmitz M.L."/>
        </authorList>
    </citation>
    <scope>PHOSPHORYLATION AT SER-468</scope>
</reference>
<reference key="44">
    <citation type="journal article" date="2006" name="Mol. Cell. Biol.">
        <title>Breast cancer metastasis suppressor 1 functions as a corepressor by enhancing histone deacetylase 1-mediated deacetylation of RelA/p65 and promoting apoptosis.</title>
        <authorList>
            <person name="Liu Y."/>
            <person name="Smith P.W."/>
            <person name="Jones D.R."/>
        </authorList>
    </citation>
    <scope>INTERACTION WITH BRMS1</scope>
    <scope>FUNCTION</scope>
    <scope>ACETYLATION AT LYS-310</scope>
</reference>
<reference key="45">
    <citation type="journal article" date="2006" name="Mol. Endocrinol.">
        <title>Coactivator-associated arginine methyltransferase-1 enhances nuclear factor-kappaB-mediated gene transcription through methylation of histone H3 at arginine 17.</title>
        <authorList>
            <person name="Miao F."/>
            <person name="Li S."/>
            <person name="Chavez V."/>
            <person name="Lanting L."/>
            <person name="Natarajan R."/>
        </authorList>
    </citation>
    <scope>INTERACTION WITH CARM1</scope>
</reference>
<reference key="46">
    <citation type="journal article" date="2006" name="Proc. Natl. Acad. Sci. U.S.A.">
        <title>IL-1 receptor-associated kinase 1 is critical for latent membrane protein 1-induced p65/RelA serine 536 phosphorylation and NF-kappaB activation.</title>
        <authorList>
            <person name="Song Y.J."/>
            <person name="Jen K.Y."/>
            <person name="Soni V."/>
            <person name="Kieff E."/>
            <person name="Cahir-McFarland E."/>
        </authorList>
    </citation>
    <scope>IDENTIFICATION IN THE NF-KAPPA-B P65-P52 COMPLEX</scope>
</reference>
<reference key="47">
    <citation type="journal article" date="2007" name="Cancer Cell">
        <title>LZAP, a putative tumor suppressor, selectively inhibits NF-kappaB.</title>
        <authorList>
            <person name="Wang J."/>
            <person name="An H."/>
            <person name="Mayo M.W."/>
            <person name="Baldwin A.S."/>
            <person name="Yarbrough W.G."/>
        </authorList>
    </citation>
    <scope>INTERACTION WITH CDK5RAP3; HDAC1; HDAC2 AND HADC3</scope>
    <scope>PHOSPHORYLATION AT SER-536</scope>
</reference>
<reference key="48">
    <citation type="journal article" date="2007" name="Genomics">
        <title>Nine-amino-acid transactivation domain: establishment and prediction utilities.</title>
        <authorList>
            <person name="Piskacek S."/>
            <person name="Gregor M."/>
            <person name="Nemethova M."/>
            <person name="Grabner M."/>
            <person name="Kovarik P."/>
            <person name="Piskacek M."/>
        </authorList>
    </citation>
    <scope>DOMAIN</scope>
</reference>
<reference key="49">
    <citation type="journal article" date="2007" name="J. Cell Biol.">
        <title>UXT is a novel and essential cofactor in the NF-kappaB transcriptional enhanceosome.</title>
        <authorList>
            <person name="Sun S."/>
            <person name="Tang Y."/>
            <person name="Lou X."/>
            <person name="Zhu L."/>
            <person name="Yang K."/>
            <person name="Zhang B."/>
            <person name="Shi H."/>
            <person name="Wang C."/>
        </authorList>
    </citation>
    <scope>FUNCTION</scope>
    <scope>INTERACTION WITH UXT</scope>
</reference>
<reference key="50">
    <citation type="journal article" date="2008" name="Blood">
        <title>The familial Mediterranean fever protein, pyrin, is cleaved by caspase-1 and activates NF-kappaB through its N-terminal fragment.</title>
        <authorList>
            <person name="Chae J.J."/>
            <person name="Wood G."/>
            <person name="Richard K."/>
            <person name="Jaffe H."/>
            <person name="Colburn N.T."/>
            <person name="Masters S.L."/>
            <person name="Gumucio D.L."/>
            <person name="Shoham N.G."/>
            <person name="Kastner D.L."/>
        </authorList>
    </citation>
    <scope>INTERACTION WITH MEFV</scope>
</reference>
<reference key="51">
    <citation type="journal article" date="2008" name="J. Allergy Clin. Immunol.">
        <title>Functional characterization of the atopy-associated gene PHF11.</title>
        <authorList>
            <person name="Clarke E."/>
            <person name="Rahman N."/>
            <person name="Page N."/>
            <person name="Rolph M.S."/>
            <person name="Stewart G.J."/>
            <person name="Jones G.J."/>
        </authorList>
    </citation>
    <scope>INTERACTION WITH PHF11</scope>
</reference>
<reference key="52">
    <citation type="journal article" date="2008" name="J. Biol. Chem.">
        <title>AKIP1 enhances NF-kappaB-dependent gene expression by promoting the nuclear retention and phosphorylation of p65.</title>
        <authorList>
            <person name="Gao N."/>
            <person name="Asamitsu K."/>
            <person name="Hibi Y."/>
            <person name="Ueno T."/>
            <person name="Okamoto T."/>
        </authorList>
    </citation>
    <scope>INTERACTION WITH AKIP1</scope>
</reference>
<reference key="53">
    <citation type="journal article" date="2008" name="Oncogene">
        <title>Copine-I represses NF-kappaB transcription by endoproteolysis of p65.</title>
        <authorList>
            <person name="Ramsey C.S."/>
            <person name="Yeung F."/>
            <person name="Stoddard P.B."/>
            <person name="Li D."/>
            <person name="Creutz C.E."/>
            <person name="Mayo M.W."/>
        </authorList>
    </citation>
    <scope>INTERACTION WITH CPEN1</scope>
    <scope>PROTEOLYTIC CLEAVAGE</scope>
</reference>
<reference key="54">
    <citation type="journal article" date="2009" name="J. Cell. Biochem.">
        <title>The DEAD-box RNA helicase DDX1 interacts with RelA and enhances nuclear factor kappaB-mediated transcription.</title>
        <authorList>
            <person name="Ishaq M."/>
            <person name="Ma L."/>
            <person name="Wu X."/>
            <person name="Mu Y."/>
            <person name="Pan J."/>
            <person name="Hu J."/>
            <person name="Hu T."/>
            <person name="Fu Q."/>
            <person name="Guo D."/>
        </authorList>
    </citation>
    <scope>FUNCTION</scope>
    <scope>INTERACTION WITH DDX1</scope>
    <scope>SUBCELLULAR LOCATION</scope>
</reference>
<reference key="55">
    <citation type="journal article" date="2009" name="Mol. Cell. Biol.">
        <title>Brd4 coactivates transcriptional activation of NF-kappaB via specific binding to acetylated RelA.</title>
        <authorList>
            <person name="Huang B."/>
            <person name="Yang X.D."/>
            <person name="Zhou M.M."/>
            <person name="Ozato K."/>
            <person name="Chen L.F."/>
        </authorList>
    </citation>
    <scope>FUNCTION</scope>
    <scope>INTERACTION WITH BRD4</scope>
    <scope>ACETYLATION AT LYS-310</scope>
</reference>
<reference key="56">
    <citation type="journal article" date="2009" name="Science">
        <title>Lysine acetylation targets protein complexes and co-regulates major cellular functions.</title>
        <authorList>
            <person name="Choudhary C."/>
            <person name="Kumar C."/>
            <person name="Gnad F."/>
            <person name="Nielsen M.L."/>
            <person name="Rehman M."/>
            <person name="Walther T.C."/>
            <person name="Olsen J.V."/>
            <person name="Mann M."/>
        </authorList>
    </citation>
    <scope>ACETYLATION [LARGE SCALE ANALYSIS] AT LYS-310</scope>
    <scope>IDENTIFICATION BY MASS SPECTROMETRY [LARGE SCALE ANALYSIS]</scope>
</reference>
<reference key="57">
    <citation type="journal article" date="2010" name="J. Biol. Chem.">
        <title>A novel LZAP-binding protein, NLBP, inhibits cell invasion.</title>
        <authorList>
            <person name="Kwon J."/>
            <person name="Cho H.J."/>
            <person name="Han S.H."/>
            <person name="No J.G."/>
            <person name="Kwon J.Y."/>
            <person name="Kim H."/>
        </authorList>
    </citation>
    <scope>INTERACTION WITH UFL1</scope>
</reference>
<reference key="58">
    <citation type="journal article" date="2010" name="J. Cell Sci.">
        <title>SIRT2 regulates NF-kappaB dependent gene expression through deacetylation of p65 Lys310.</title>
        <authorList>
            <person name="Rothgiesser K.M."/>
            <person name="Erener S."/>
            <person name="Waibel S."/>
            <person name="Luscher B."/>
            <person name="Hottiger M.O."/>
        </authorList>
    </citation>
    <scope>DEACETYLATION BY SIRT2</scope>
</reference>
<reference key="59">
    <citation type="journal article" date="2010" name="Mol. Cell. Biol.">
        <title>Zinc finger protein Gfi1 controls the endotoxin-mediated Toll-like receptor inflammatory response by antagonizing NF-kappaB p65.</title>
        <authorList>
            <person name="Sharif-Askari E."/>
            <person name="Vassen L."/>
            <person name="Kosan C."/>
            <person name="Khandanpour C."/>
            <person name="Gaudreau M.C."/>
            <person name="Heyd F."/>
            <person name="Okayama T."/>
            <person name="Jin J."/>
            <person name="Rojas M.E."/>
            <person name="Grimes H.L."/>
            <person name="Zeng H."/>
            <person name="Moroy T."/>
        </authorList>
    </citation>
    <scope>INTERACTION WITH GFI1</scope>
    <scope>SUBCELLULAR LOCATION</scope>
    <scope>INDUCTION</scope>
    <scope>FUNCTION</scope>
</reference>
<reference key="60">
    <citation type="journal article" date="2010" name="Proc. Natl. Acad. Sci. U.S.A.">
        <title>The Listeria monocytogenes InlC protein interferes with innate immune responses by targeting the I{kappa}B kinase subunit IKK{alpha}.</title>
        <authorList>
            <person name="Gouin E."/>
            <person name="Adib-Conquy M."/>
            <person name="Balestrino D."/>
            <person name="Nahori M.A."/>
            <person name="Villiers V."/>
            <person name="Colland F."/>
            <person name="Dramsi S."/>
            <person name="Dussurget O."/>
            <person name="Cossart P."/>
        </authorList>
    </citation>
    <scope>SUBCELLULAR LOCATION (MICROBIAL INFECTION)</scope>
</reference>
<reference key="61">
    <citation type="journal article" date="2011" name="BMC Syst. Biol.">
        <title>Initial characterization of the human central proteome.</title>
        <authorList>
            <person name="Burkard T.R."/>
            <person name="Planyavsky M."/>
            <person name="Kaupe I."/>
            <person name="Breitwieser F.P."/>
            <person name="Buerckstuemmer T."/>
            <person name="Bennett K.L."/>
            <person name="Superti-Furga G."/>
            <person name="Colinge J."/>
        </authorList>
    </citation>
    <scope>IDENTIFICATION BY MASS SPECTROMETRY [LARGE SCALE ANALYSIS]</scope>
</reference>
<reference key="62">
    <citation type="journal article" date="2011" name="J. Biol. Chem.">
        <title>TRAF7 protein promotes Lys-29-linked polyubiquitination of IkappaB kinase (IKKgamma)/NF-kappaB essential modulator (NEMO) and p65/RelA protein and represses NF-kappaB activation.</title>
        <authorList>
            <person name="Zotti T."/>
            <person name="Uva A."/>
            <person name="Ferravante A."/>
            <person name="Vessichelli M."/>
            <person name="Scudiero I."/>
            <person name="Ceccarelli M."/>
            <person name="Vito P."/>
            <person name="Stilo R."/>
        </authorList>
    </citation>
    <scope>UBIQUITINATION BY TRAF7</scope>
</reference>
<reference key="63">
    <citation type="journal article" date="2011" name="J. Virol.">
        <title>Kaposi's sarcoma-associated herpesvirus-encoded latency-associated nuclear antigen reduces interleukin-8 expression in endothelial cells and impairs neutrophil chemotaxis by degrading nuclear p65.</title>
        <authorList>
            <person name="Li X."/>
            <person name="Liang D."/>
            <person name="Lin X."/>
            <person name="Robertson E.S."/>
            <person name="Lan K."/>
        </authorList>
    </citation>
    <scope>INTERACTION WITH HERPES VIRUS 8 PROTEIN LANA1 (MICROBIAL INFECTION)</scope>
</reference>
<reference key="64">
    <citation type="journal article" date="2011" name="Nucleic Acids Res.">
        <title>Structural basis of SETD6-mediated regulation of the NF-kB network via methyl-lysine signaling.</title>
        <authorList>
            <person name="Chang Y."/>
            <person name="Levy D."/>
            <person name="Horton J.R."/>
            <person name="Peng J."/>
            <person name="Zhang X."/>
            <person name="Gozani O."/>
            <person name="Cheng X."/>
        </authorList>
    </citation>
    <scope>INTERACTION WITH EHMT1</scope>
    <scope>METHYLATION AT LYS-310</scope>
</reference>
<reference key="65">
    <citation type="journal article" date="2012" name="PLoS ONE">
        <title>NF-kappaB repression by PIAS3 mediated RelA SUMOylation.</title>
        <authorList>
            <person name="Liu Y."/>
            <person name="Bridges R."/>
            <person name="Wortham A."/>
            <person name="Kulesz-Martin M."/>
        </authorList>
    </citation>
    <scope>SUMOYLATION AT LYS-37; LYS-122 AND LYS-123 BY PIAS3</scope>
</reference>
<reference key="66">
    <citation type="journal article" date="2012" name="Proc. Natl. Acad. Sci. U.S.A.">
        <title>N-terminal acetylome analyses and functional insights of the N-terminal acetyltransferase NatB.</title>
        <authorList>
            <person name="Van Damme P."/>
            <person name="Lasa M."/>
            <person name="Polevoda B."/>
            <person name="Gazquez C."/>
            <person name="Elosegui-Artola A."/>
            <person name="Kim D.S."/>
            <person name="De Juan-Pardo E."/>
            <person name="Demeyer K."/>
            <person name="Hole K."/>
            <person name="Larrea E."/>
            <person name="Timmerman E."/>
            <person name="Prieto J."/>
            <person name="Arnesen T."/>
            <person name="Sherman F."/>
            <person name="Gevaert K."/>
            <person name="Aldabe R."/>
        </authorList>
    </citation>
    <scope>ACETYLATION [LARGE SCALE ANALYSIS] AT MET-1</scope>
    <scope>IDENTIFICATION BY MASS SPECTROMETRY [LARGE SCALE ANALYSIS]</scope>
</reference>
<reference key="67">
    <citation type="journal article" date="2014" name="Nature">
        <title>C11orf95-RELA fusions drive oncogenic NF-kappaB signalling in ependymoma.</title>
        <authorList>
            <person name="Parker M."/>
            <person name="Mohankumar K.M."/>
            <person name="Punchihewa C."/>
            <person name="Weinlich R."/>
            <person name="Dalton J.D."/>
            <person name="Li Y."/>
            <person name="Lee R."/>
            <person name="Tatevossian R.G."/>
            <person name="Phoenix T.N."/>
            <person name="Thiruvenkatam R."/>
            <person name="White E."/>
            <person name="Tang B."/>
            <person name="Orisme W."/>
            <person name="Gupta K."/>
            <person name="Rusch M."/>
            <person name="Chen X."/>
            <person name="Li Y."/>
            <person name="Nagahawhatte P."/>
            <person name="Hedlund E."/>
            <person name="Finkelstein D."/>
            <person name="Wu G."/>
            <person name="Shurtleff S."/>
            <person name="Easton J."/>
            <person name="Boggs K."/>
            <person name="Yergeau D."/>
            <person name="Vadodaria B."/>
            <person name="Mulder H.L."/>
            <person name="Becksfort J."/>
            <person name="Becksford J."/>
            <person name="Gupta P."/>
            <person name="Huether R."/>
            <person name="Ma J."/>
            <person name="Song G."/>
            <person name="Gajjar A."/>
            <person name="Merchant T."/>
            <person name="Boop F."/>
            <person name="Smith A.A."/>
            <person name="Ding L."/>
            <person name="Lu C."/>
            <person name="Ochoa K."/>
            <person name="Zhao D."/>
            <person name="Fulton R.S."/>
            <person name="Fulton L.L."/>
            <person name="Mardis E.R."/>
            <person name="Wilson R.K."/>
            <person name="Downing J.R."/>
            <person name="Green D.R."/>
            <person name="Zhang J."/>
            <person name="Ellison D.W."/>
            <person name="Gilbertson R.J."/>
        </authorList>
    </citation>
    <scope>CHROMOSOMAL TRANSLOCATION WITH ZFTA</scope>
</reference>
<reference key="68">
    <citation type="journal article" date="2014" name="J. Virol.">
        <title>Herpes simplex virus 1 protein kinase US3 hyperphosphorylates p65/RelA and dampens NF-kappaB activation.</title>
        <authorList>
            <person name="Wang K."/>
            <person name="Ni L."/>
            <person name="Wang S."/>
            <person name="Zheng C."/>
        </authorList>
    </citation>
    <scope>PHOSPHORYLATION AT SER-75 (MICROBIAL INFECTION)</scope>
    <scope>SUBCELLULAR LOCATION</scope>
</reference>
<reference key="69">
    <citation type="journal article" date="2015" name="J. Virol.">
        <title>Poxvirus protein MC132 from molluscum contagiosum virus inhibits NF-B activation by targeting p65 for degradation.</title>
        <authorList>
            <person name="Brady G."/>
            <person name="Haas D.A."/>
            <person name="Farrell P.J."/>
            <person name="Pichlmair A."/>
            <person name="Bowie A.G."/>
        </authorList>
    </citation>
    <scope>INTERACTION WITH MOLLUSCUM CONTAGIOSUM VIRUS PROTEIN MC132 (MICROBIAL INFECTION)</scope>
</reference>
<reference key="70">
    <citation type="journal article" date="2015" name="Mol. Biol. Cell">
        <title>Ubiquitination of ECSIT is crucial for the activation of p65/p50 NF-kappaBs in Toll-like receptor 4 signaling.</title>
        <authorList>
            <person name="Mi Wi S."/>
            <person name="Park J."/>
            <person name="Shim J.H."/>
            <person name="Chun E."/>
            <person name="Lee K.Y."/>
        </authorList>
    </citation>
    <scope>INTERACTION WITH ECSIT</scope>
    <scope>SUBCELLULAR LOCATION</scope>
</reference>
<reference key="71">
    <citation type="journal article" date="2016" name="PLoS ONE">
        <title>The DEAD-Box RNA Helicase DDX3 Interacts with NF-kappaB Subunit p65 and Suppresses p65-Mediated Transcription.</title>
        <authorList>
            <person name="Xiang N."/>
            <person name="He M."/>
            <person name="Ishaq M."/>
            <person name="Gao Y."/>
            <person name="Song F."/>
            <person name="Guo L."/>
            <person name="Ma L."/>
            <person name="Sun G."/>
            <person name="Liu D."/>
            <person name="Guo D."/>
            <person name="Chen Y."/>
        </authorList>
    </citation>
    <scope>INTERACTION WITH DDX3X</scope>
    <scope>SUBCELLULAR LOCATION</scope>
</reference>
<reference key="72">
    <citation type="journal article" date="2017" name="J. Exp. Med.">
        <title>Human RELA haploinsufficiency results in autosomal-dominant chronic mucocutaneous ulceration.</title>
        <authorList>
            <person name="Badran Y.R."/>
            <person name="Dedeoglu F."/>
            <person name="Leyva Castillo J.M."/>
            <person name="Bainter W."/>
            <person name="Ohsumi T.K."/>
            <person name="Bousvaros A."/>
            <person name="Goldsmith J.D."/>
            <person name="Geha R.S."/>
            <person name="Chou J."/>
        </authorList>
    </citation>
    <scope>INVOLVEMENT IN AIFBL3</scope>
</reference>
<reference key="73">
    <citation type="journal article" date="2017" name="Sci. Rep.">
        <title>LRRC25 functions as an inhibitor of NF-kappaB signaling pathway by promoting p65/RelA for autophagic degradation.</title>
        <authorList>
            <person name="Feng Y."/>
            <person name="Duan T."/>
            <person name="Du Y."/>
            <person name="Jin S."/>
            <person name="Wang M."/>
            <person name="Cui J."/>
            <person name="Wang R.F."/>
        </authorList>
    </citation>
    <scope>INTERACTION WITH LRRC25</scope>
</reference>
<reference key="74">
    <citation type="journal article" date="2018" name="PLoS Biol.">
        <title>Zbtb7a is a transducer for the control of promoter accessibility by NF-kappa B and multiple other transcription factors.</title>
        <authorList>
            <person name="Ramos Pittol J.M."/>
            <person name="Oruba A."/>
            <person name="Mittler G."/>
            <person name="Saccani S."/>
            <person name="van Essen D."/>
        </authorList>
    </citation>
    <scope>INTERACTION WITH ZBTB7A</scope>
</reference>
<reference key="75">
    <citation type="journal article" date="2019" name="FEBS Lett.">
        <title>The E3 ubiquitin ligase RNF182 inhibits TLR-triggered cytokine production through promoting p65 ubiquitination and degradation.</title>
        <authorList>
            <person name="Cao Y."/>
            <person name="Sun Y."/>
            <person name="Chang H."/>
            <person name="Sun X."/>
            <person name="Yang S."/>
        </authorList>
    </citation>
    <scope>UBIQUITINATION</scope>
</reference>
<reference key="76">
    <citation type="journal article" date="2019" name="J. Virol.">
        <title>Human Cytomegalovirus DNA Polymerase Subunit UL44 Antagonizes Antiviral Immune Responses by Suppressing IRF3- and NF-kappaB-Mediated Transcription.</title>
        <authorList>
            <person name="Fu Y.Z."/>
            <person name="Su S."/>
            <person name="Zou H.M."/>
            <person name="Guo Y."/>
            <person name="Wang S.Y."/>
            <person name="Li S."/>
            <person name="Luo M.H."/>
            <person name="Wang Y.Y."/>
        </authorList>
    </citation>
    <scope>INTERACTION WITH HUMAN CYTOMEGALOVIRUS PROTEIN UL44 (MICROBIAL INFECTION)</scope>
</reference>
<reference key="77">
    <citation type="journal article" date="2021" name="Cell Rep.">
        <title>MDA5 Governs the Innate Immune Response to SARS-CoV-2 in Lung Epithelial Cells.</title>
        <authorList>
            <person name="Yin X."/>
            <person name="Riva L."/>
            <person name="Pu Y."/>
            <person name="Martin-Sancho L."/>
            <person name="Kanamune J."/>
            <person name="Yamamoto Y."/>
            <person name="Sakai K."/>
            <person name="Gotoh S."/>
            <person name="Miorin L."/>
            <person name="De Jesus P.D."/>
            <person name="Yang C.C."/>
            <person name="Herbert K.M."/>
            <person name="Yoh S."/>
            <person name="Hultquist J.F."/>
            <person name="Garcia-Sastre A."/>
            <person name="Chanda S.K."/>
        </authorList>
    </citation>
    <scope>FUNCTION</scope>
</reference>
<reference key="78">
    <citation type="journal article" date="1998" name="Cell">
        <title>Structure of an IkappaBalpha/NF-kappaB complex.</title>
        <authorList>
            <person name="Jacobs M.D."/>
            <person name="Harrison S.C."/>
        </authorList>
    </citation>
    <scope>X-RAY CRYSTALLOGRAPHY (2.7 ANGSTROMS)</scope>
</reference>
<reference key="79">
    <citation type="journal article" date="2018" name="J. Allergy Clin. Immunol.">
        <title>RELA haploinsufficiency in CD4 lymphoproliferative disease with autoimmune cytopenias.</title>
        <authorList>
            <person name="Comrie W.A."/>
            <person name="Faruqi A.J."/>
            <person name="Price S."/>
            <person name="Zhang Y."/>
            <person name="Rao V.K."/>
            <person name="Su H.C."/>
            <person name="Lenardo M.J."/>
        </authorList>
    </citation>
    <scope>VARIANT 246-ARG--SER-549 DEL</scope>
</reference>
<proteinExistence type="evidence at protein level"/>
<keyword id="KW-0002">3D-structure</keyword>
<keyword id="KW-0007">Acetylation</keyword>
<keyword id="KW-0010">Activator</keyword>
<keyword id="KW-0025">Alternative splicing</keyword>
<keyword id="KW-0160">Chromosomal rearrangement</keyword>
<keyword id="KW-0963">Cytoplasm</keyword>
<keyword id="KW-0225">Disease variant</keyword>
<keyword id="KW-0238">DNA-binding</keyword>
<keyword id="KW-0945">Host-virus interaction</keyword>
<keyword id="KW-1017">Isopeptide bond</keyword>
<keyword id="KW-0488">Methylation</keyword>
<keyword id="KW-0539">Nucleus</keyword>
<keyword id="KW-0597">Phosphoprotein</keyword>
<keyword id="KW-1267">Proteomics identification</keyword>
<keyword id="KW-1185">Reference proteome</keyword>
<keyword id="KW-0702">S-nitrosylation</keyword>
<keyword id="KW-0804">Transcription</keyword>
<keyword id="KW-0805">Transcription regulation</keyword>
<keyword id="KW-0832">Ubl conjugation</keyword>
<evidence type="ECO:0000250" key="1"/>
<evidence type="ECO:0000250" key="2">
    <source>
        <dbReference type="UniProtKB" id="Q04207"/>
    </source>
</evidence>
<evidence type="ECO:0000250" key="3">
    <source>
        <dbReference type="UniProtKB" id="Q7TQN4"/>
    </source>
</evidence>
<evidence type="ECO:0000255" key="4"/>
<evidence type="ECO:0000255" key="5">
    <source>
        <dbReference type="PROSITE-ProRule" id="PRU00265"/>
    </source>
</evidence>
<evidence type="ECO:0000256" key="6">
    <source>
        <dbReference type="SAM" id="MobiDB-lite"/>
    </source>
</evidence>
<evidence type="ECO:0000269" key="7">
    <source>
    </source>
</evidence>
<evidence type="ECO:0000269" key="8">
    <source>
    </source>
</evidence>
<evidence type="ECO:0000269" key="9">
    <source>
    </source>
</evidence>
<evidence type="ECO:0000269" key="10">
    <source>
    </source>
</evidence>
<evidence type="ECO:0000269" key="11">
    <source>
    </source>
</evidence>
<evidence type="ECO:0000269" key="12">
    <source>
    </source>
</evidence>
<evidence type="ECO:0000269" key="13">
    <source>
    </source>
</evidence>
<evidence type="ECO:0000269" key="14">
    <source>
    </source>
</evidence>
<evidence type="ECO:0000269" key="15">
    <source>
    </source>
</evidence>
<evidence type="ECO:0000269" key="16">
    <source>
    </source>
</evidence>
<evidence type="ECO:0000269" key="17">
    <source>
    </source>
</evidence>
<evidence type="ECO:0000269" key="18">
    <source>
    </source>
</evidence>
<evidence type="ECO:0000269" key="19">
    <source>
    </source>
</evidence>
<evidence type="ECO:0000269" key="20">
    <source>
    </source>
</evidence>
<evidence type="ECO:0000269" key="21">
    <source>
    </source>
</evidence>
<evidence type="ECO:0000269" key="22">
    <source>
    </source>
</evidence>
<evidence type="ECO:0000269" key="23">
    <source>
    </source>
</evidence>
<evidence type="ECO:0000269" key="24">
    <source>
    </source>
</evidence>
<evidence type="ECO:0000269" key="25">
    <source>
    </source>
</evidence>
<evidence type="ECO:0000269" key="26">
    <source>
    </source>
</evidence>
<evidence type="ECO:0000269" key="27">
    <source>
    </source>
</evidence>
<evidence type="ECO:0000269" key="28">
    <source>
    </source>
</evidence>
<evidence type="ECO:0000269" key="29">
    <source>
    </source>
</evidence>
<evidence type="ECO:0000269" key="30">
    <source>
    </source>
</evidence>
<evidence type="ECO:0000269" key="31">
    <source>
    </source>
</evidence>
<evidence type="ECO:0000269" key="32">
    <source>
    </source>
</evidence>
<evidence type="ECO:0000269" key="33">
    <source>
    </source>
</evidence>
<evidence type="ECO:0000269" key="34">
    <source>
    </source>
</evidence>
<evidence type="ECO:0000269" key="35">
    <source>
    </source>
</evidence>
<evidence type="ECO:0000269" key="36">
    <source>
    </source>
</evidence>
<evidence type="ECO:0000269" key="37">
    <source>
    </source>
</evidence>
<evidence type="ECO:0000269" key="38">
    <source>
    </source>
</evidence>
<evidence type="ECO:0000269" key="39">
    <source>
    </source>
</evidence>
<evidence type="ECO:0000269" key="40">
    <source>
    </source>
</evidence>
<evidence type="ECO:0000269" key="41">
    <source>
    </source>
</evidence>
<evidence type="ECO:0000269" key="42">
    <source>
    </source>
</evidence>
<evidence type="ECO:0000269" key="43">
    <source>
    </source>
</evidence>
<evidence type="ECO:0000269" key="44">
    <source>
    </source>
</evidence>
<evidence type="ECO:0000269" key="45">
    <source>
    </source>
</evidence>
<evidence type="ECO:0000269" key="46">
    <source>
    </source>
</evidence>
<evidence type="ECO:0000269" key="47">
    <source>
    </source>
</evidence>
<evidence type="ECO:0000269" key="48">
    <source>
    </source>
</evidence>
<evidence type="ECO:0000269" key="49">
    <source>
    </source>
</evidence>
<evidence type="ECO:0000269" key="50">
    <source>
    </source>
</evidence>
<evidence type="ECO:0000269" key="51">
    <source>
    </source>
</evidence>
<evidence type="ECO:0000269" key="52">
    <source>
    </source>
</evidence>
<evidence type="ECO:0000269" key="53">
    <source>
    </source>
</evidence>
<evidence type="ECO:0000303" key="54">
    <source>
    </source>
</evidence>
<evidence type="ECO:0000303" key="55">
    <source>
    </source>
</evidence>
<evidence type="ECO:0000303" key="56">
    <source>
    </source>
</evidence>
<evidence type="ECO:0000305" key="57"/>
<evidence type="ECO:0000305" key="58">
    <source>
    </source>
</evidence>
<evidence type="ECO:0007744" key="59">
    <source>
    </source>
</evidence>
<evidence type="ECO:0007744" key="60">
    <source>
    </source>
</evidence>
<evidence type="ECO:0007829" key="61">
    <source>
        <dbReference type="PDB" id="1NFI"/>
    </source>
</evidence>
<evidence type="ECO:0007829" key="62">
    <source>
        <dbReference type="PDB" id="2O61"/>
    </source>
</evidence>
<evidence type="ECO:0007829" key="63">
    <source>
        <dbReference type="PDB" id="5U4K"/>
    </source>
</evidence>
<organism>
    <name type="scientific">Homo sapiens</name>
    <name type="common">Human</name>
    <dbReference type="NCBI Taxonomy" id="9606"/>
    <lineage>
        <taxon>Eukaryota</taxon>
        <taxon>Metazoa</taxon>
        <taxon>Chordata</taxon>
        <taxon>Craniata</taxon>
        <taxon>Vertebrata</taxon>
        <taxon>Euteleostomi</taxon>
        <taxon>Mammalia</taxon>
        <taxon>Eutheria</taxon>
        <taxon>Euarchontoglires</taxon>
        <taxon>Primates</taxon>
        <taxon>Haplorrhini</taxon>
        <taxon>Catarrhini</taxon>
        <taxon>Hominidae</taxon>
        <taxon>Homo</taxon>
    </lineage>
</organism>
<comment type="function">
    <text evidence="8 14 23 28 31 34 35 36 53">NF-kappa-B is a pleiotropic transcription factor present in almost all cell types and is the endpoint of a series of signal transduction events that are initiated by a vast array of stimuli related to many biological processes such as inflammation, immunity, differentiation, cell growth, tumorigenesis and apoptosis. NF-kappa-B is a homo- or heterodimeric complex formed by the Rel-like domain-containing proteins RELA/p65, RELB, NFKB1/p105, NFKB1/p50, REL and NFKB2/p52. The heterodimeric RELA-NFKB1 complex appears to be most abundant one. The dimers bind at kappa-B sites in the DNA of their target genes and the individual dimers have distinct preferences for different kappa-B sites that they can bind with distinguishable affinity and specificity. Different dimer combinations act as transcriptional activators or repressors, respectively. The NF-kappa-B heterodimeric RELA-NFKB1 and RELA-REL complexes, for instance, function as transcriptional activators. NF-kappa-B is controlled by various mechanisms of post-translational modification and subcellular compartmentalization as well as by interactions with other cofactors or corepressors. NF-kappa-B complexes are held in the cytoplasm in an inactive state complexed with members of the NF-kappa-B inhibitor (I-kappa-B) family. In a conventional activation pathway, I-kappa-B is phosphorylated by I-kappa-B kinases (IKKs) in response to different activators, subsequently degraded thus liberating the active NF-kappa-B complex which translocates to the nucleus. The inhibitory effect of I-kappa-B on NF-kappa-B through retention in the cytoplasm is exerted primarily through the interaction with RELA. RELA shows a weak DNA-binding site which could contribute directly to DNA binding in the NF-kappa-B complex. Besides its activity as a direct transcriptional activator, it is also able to modulate promoters accessibility to transcription factors and thereby indirectly regulate gene expression. Associates with chromatin at the NF-kappa-B promoter region via association with DDX1. Essential for cytokine gene expression in T-cells (PubMed:15790681). The NF-kappa-B homodimeric RELA-RELA complex appears to be involved in invasin-mediated activation of IL-8 expression. Key transcription factor regulating the IFN response during SARS-CoV-2 infection (PubMed:33440148).</text>
</comment>
<comment type="subunit">
    <text evidence="2 3 16 19 23 32 33 38 44 46 48 50">Component of the NF-kappa-B p65-p50 complex. Component of the NF-kappa-B p65-c-Rel complex. Homodimer; component of the NF-kappa-B p65-p65 complex. Component of the NF-kappa-B p65-p52 complex. May interact with ETHE1. Binds TLE5 and TLE1. Interacts with TP53BP2. Binds to and is phosphorylated by the activated form of either RPS6KA4 or RPS6KA5. Interacts with ING4 and this interaction may be indirect. Interacts with CARM1, USP48 and UNC5CL. Interacts with IRAK1BP1 (By similarity). Interacts with NFKBID (By similarity). Interacts with NFKBIA (PubMed:1493333). Interacts with GSK3B. Interacts with NFKBIB (By similarity). Interacts with NFKBIE. Interacts with NFKBIZ. Interacts with EHMT1 (via ANK repeats) (PubMed:21515635). Part of a 70-90 kDa complex at least consisting of CHUK, IKBKB, NFKBIA, RELA, ELP1 and MAP3K14. Interacts with HDAC3; HDAC3 mediates the deacetylation of RELA. Interacts with HDAC1; the interaction requires non-phosphorylated RELA. Interacts with CBP; the interaction requires phosphorylated RELA. Interacts (phosphorylated at 'Thr-254') with PIN1; the interaction inhibits p65 binding to NFKBIA. Interacts with SOCS1. Interacts with UXT. Interacts with MTDH and PHF11. Interacts with ARRB2. Interacts with NFKBIA (when phosphorylated), the interaction is direct; phosphorylated NFKBIA is part of a SCF(BTRC)-like complex lacking CUL1. Interacts with RNF25. Interacts (via C-terminus) with DDX1. Interacts with UFL1 and COMMD1. Interacts with BRMS1; this promotes deacetylation of 'Lys-310'. Interacts with NOTCH2 (By similarity). Directly interacts with MEN1; this interaction represses NFKB-mediated transactivation. Interacts with AKIP1, which promotes the phosphorylation and nuclear retention of RELA. Interacts (via the RHD) with GFI1; the interaction, after bacterial lipopolysaccharide (LPS) stimulation, inhibits the transcriptional activity by interfering with the DNA-binding activity to target gene promoter DNA. Interacts (when acetylated at Lys-310) with BRD4; leading to activation of the NF-kappa-B pathway. Interacts with MEFV. Interacts with CLOCK (By similarity). Interacts (via N-terminus) with CPEN1; this interaction induces proteolytic cleavage of p65/RELA subunit and inhibition of NF-kappa-B transcriptional activity (PubMed:18212740). Interacts with FOXP3. Interacts with CDK5RAP3; stimulates the interaction of RELA with HDAC1, HDAC2 and HDAC3 thereby inhibiting NF-kappa-B transcriptional activity (PubMed:17785205). Interacts with DHX9; this interaction is direct and activates NF-kappa-B-mediated transcription (PubMed:15355351). Interacts with LRRC25 (PubMed:29044191). Interacts with TBX21 (By similarity). Interacts with KAT2A (By similarity). Interacts with ZBTB7A; involved in the control by RELA of the accessibility of target gene promoters (PubMed:29813070). Directly interacts with DDX3X; this interaction may trap RELA in the cytoplasm, impairing nuclear relocalization upon TNF activating signals (PubMed:27736973). Interacts with PHF2 (By similarity). Interacts with MKRN2; the interaction leads to its polyubiquitination and proteasome-dependent degradation (By similarity). Interacts with ECSIT (PubMed:25355951). Interacts with RAB28; the interaction contributes to RELA transport from cytoplasm to nucleus (By similarity).</text>
</comment>
<comment type="subunit">
    <text evidence="21">(Microbial infection) Interacts with human respiratory syncytial virus (HRSV) protein M2-1.</text>
</comment>
<comment type="subunit">
    <text evidence="45">(Microbial infection) Interacts with molluscum contagiosum virus MC132.</text>
</comment>
<comment type="subunit">
    <text evidence="40">(Microbial infection) Interacts with herpes virus 8 virus protein LANA1.</text>
</comment>
<comment type="subunit">
    <text evidence="51">(Microbial infection) Interacts with human cytomegalovirus protein UL44; this interaction prevents NF-kappa-B binding to its promoters.</text>
</comment>
<comment type="interaction">
    <interactant intactId="EBI-73886">
        <id>Q04206</id>
    </interactant>
    <interactant intactId="EBI-372428">
        <id>Q9NY61</id>
        <label>AATF</label>
    </interactant>
    <organismsDiffer>false</organismsDiffer>
    <experiments>3</experiments>
</comment>
<comment type="interaction">
    <interactant intactId="EBI-73886">
        <id>Q04206</id>
    </interactant>
    <interactant intactId="EBI-9844134">
        <id>P18847-3</id>
        <label>ATF3</label>
    </interactant>
    <organismsDiffer>false</organismsDiffer>
    <experiments>5</experiments>
</comment>
<comment type="interaction">
    <interactant intactId="EBI-73886">
        <id>Q04206</id>
    </interactant>
    <interactant intactId="EBI-1055977">
        <id>O75531</id>
        <label>BANF1</label>
    </interactant>
    <organismsDiffer>false</organismsDiffer>
    <experiments>3</experiments>
</comment>
<comment type="interaction">
    <interactant intactId="EBI-73886">
        <id>Q04206</id>
    </interactant>
    <interactant intactId="EBI-723869">
        <id>O60885</id>
        <label>BRD4</label>
    </interactant>
    <organismsDiffer>false</organismsDiffer>
    <experiments>8</experiments>
</comment>
<comment type="interaction">
    <interactant intactId="EBI-73886">
        <id>Q04206</id>
    </interactant>
    <interactant intactId="EBI-718729">
        <id>P55212</id>
        <label>CASP6</label>
    </interactant>
    <organismsDiffer>false</organismsDiffer>
    <experiments>3</experiments>
</comment>
<comment type="interaction">
    <interactant intactId="EBI-73886">
        <id>Q04206</id>
    </interactant>
    <interactant intactId="EBI-6624398">
        <id>P06307</id>
        <label>CCK</label>
    </interactant>
    <organismsDiffer>false</organismsDiffer>
    <experiments>3</experiments>
</comment>
<comment type="interaction">
    <interactant intactId="EBI-73886">
        <id>Q04206</id>
    </interactant>
    <interactant intactId="EBI-308374">
        <id>Q96SN8</id>
        <label>CDK5RAP2</label>
    </interactant>
    <organismsDiffer>false</organismsDiffer>
    <experiments>3</experiments>
</comment>
<comment type="interaction">
    <interactant intactId="EBI-73886">
        <id>Q04206</id>
    </interactant>
    <interactant intactId="EBI-718818">
        <id>Q96JB5</id>
        <label>CDK5RAP3</label>
    </interactant>
    <organismsDiffer>false</organismsDiffer>
    <experiments>4</experiments>
</comment>
<comment type="interaction">
    <interactant intactId="EBI-73886">
        <id>Q04206</id>
    </interactant>
    <interactant intactId="EBI-25837549">
        <id>P28329-3</id>
        <label>CHAT</label>
    </interactant>
    <organismsDiffer>false</organismsDiffer>
    <experiments>3</experiments>
</comment>
<comment type="interaction">
    <interactant intactId="EBI-73886">
        <id>Q04206</id>
    </interactant>
    <interactant intactId="EBI-81249">
        <id>O15111</id>
        <label>CHUK</label>
    </interactant>
    <organismsDiffer>false</organismsDiffer>
    <experiments>3</experiments>
</comment>
<comment type="interaction">
    <interactant intactId="EBI-73886">
        <id>Q04206</id>
    </interactant>
    <interactant intactId="EBI-1550112">
        <id>Q8N668</id>
        <label>COMMD1</label>
    </interactant>
    <organismsDiffer>false</organismsDiffer>
    <experiments>7</experiments>
</comment>
<comment type="interaction">
    <interactant intactId="EBI-73886">
        <id>Q04206</id>
    </interactant>
    <interactant intactId="EBI-81215">
        <id>Q92793</id>
        <label>CREBBP</label>
    </interactant>
    <organismsDiffer>false</organismsDiffer>
    <experiments>6</experiments>
</comment>
<comment type="interaction">
    <interactant intactId="EBI-73886">
        <id>Q04206</id>
    </interactant>
    <interactant intactId="EBI-947590">
        <id>P52943</id>
        <label>CRIP2</label>
    </interactant>
    <organismsDiffer>false</organismsDiffer>
    <experiments>2</experiments>
</comment>
<comment type="interaction">
    <interactant intactId="EBI-73886">
        <id>Q04206</id>
    </interactant>
    <interactant intactId="EBI-491549">
        <id>P35222</id>
        <label>CTNNB1</label>
    </interactant>
    <organismsDiffer>false</organismsDiffer>
    <experiments>3</experiments>
</comment>
<comment type="interaction">
    <interactant intactId="EBI-73886">
        <id>Q04206</id>
    </interactant>
    <interactant intactId="EBI-77321">
        <id>Q9UER7</id>
        <label>DAXX</label>
    </interactant>
    <organismsDiffer>false</organismsDiffer>
    <experiments>5</experiments>
</comment>
<comment type="interaction">
    <interactant intactId="EBI-73886">
        <id>Q04206</id>
    </interactant>
    <interactant intactId="EBI-352022">
        <id>Q08211</id>
        <label>DHX9</label>
    </interactant>
    <organismsDiffer>false</organismsDiffer>
    <experiments>4</experiments>
</comment>
<comment type="interaction">
    <interactant intactId="EBI-73886">
        <id>Q04206</id>
    </interactant>
    <interactant intactId="EBI-766087">
        <id>Q9H9B1</id>
        <label>EHMT1</label>
    </interactant>
    <organismsDiffer>false</organismsDiffer>
    <experiments>3</experiments>
</comment>
<comment type="interaction">
    <interactant intactId="EBI-73886">
        <id>Q04206</id>
    </interactant>
    <interactant intactId="EBI-78473">
        <id>P03372</id>
        <label>ESR1</label>
    </interactant>
    <organismsDiffer>false</organismsDiffer>
    <experiments>9</experiments>
</comment>
<comment type="interaction">
    <interactant intactId="EBI-73886">
        <id>Q04206</id>
    </interactant>
    <interactant intactId="EBI-348399">
        <id>P22607</id>
        <label>FGFR3</label>
    </interactant>
    <organismsDiffer>false</organismsDiffer>
    <experiments>3</experiments>
</comment>
<comment type="interaction">
    <interactant intactId="EBI-73886">
        <id>Q04206</id>
    </interactant>
    <interactant intactId="EBI-949368">
        <id>Q99684</id>
        <label>GFI1</label>
    </interactant>
    <organismsDiffer>false</organismsDiffer>
    <experiments>2</experiments>
</comment>
<comment type="interaction">
    <interactant intactId="EBI-73886">
        <id>Q04206</id>
    </interactant>
    <interactant intactId="EBI-351506">
        <id>P06396</id>
        <label>GSN</label>
    </interactant>
    <organismsDiffer>false</organismsDiffer>
    <experiments>3</experiments>
</comment>
<comment type="interaction">
    <interactant intactId="EBI-73886">
        <id>Q04206</id>
    </interactant>
    <interactant intactId="EBI-301834">
        <id>Q13547</id>
        <label>HDAC1</label>
    </interactant>
    <organismsDiffer>false</organismsDiffer>
    <experiments>6</experiments>
</comment>
<comment type="interaction">
    <interactant intactId="EBI-73886">
        <id>Q04206</id>
    </interactant>
    <interactant intactId="EBI-1748945">
        <id>P46695</id>
        <label>IER3</label>
    </interactant>
    <organismsDiffer>false</organismsDiffer>
    <experiments>6</experiments>
</comment>
<comment type="interaction">
    <interactant intactId="EBI-73886">
        <id>Q04206</id>
    </interactant>
    <interactant intactId="EBI-81266">
        <id>O14920</id>
        <label>IKBKB</label>
    </interactant>
    <organismsDiffer>false</organismsDiffer>
    <experiments>3</experiments>
</comment>
<comment type="interaction">
    <interactant intactId="EBI-73886">
        <id>Q04206</id>
    </interactant>
    <interactant intactId="EBI-3931258">
        <id>Q13568</id>
        <label>IRF5</label>
    </interactant>
    <organismsDiffer>false</organismsDiffer>
    <experiments>6</experiments>
</comment>
<comment type="interaction">
    <interactant intactId="EBI-73886">
        <id>Q04206</id>
    </interactant>
    <interactant intactId="EBI-765758">
        <id>Q9Y2K7</id>
        <label>KDM2A</label>
    </interactant>
    <organismsDiffer>false</organismsDiffer>
    <experiments>2</experiments>
</comment>
<comment type="interaction">
    <interactant intactId="EBI-73886">
        <id>Q04206</id>
    </interactant>
    <interactant intactId="EBI-751001">
        <id>Q14145</id>
        <label>KEAP1</label>
    </interactant>
    <organismsDiffer>false</organismsDiffer>
    <experiments>4</experiments>
</comment>
<comment type="interaction">
    <interactant intactId="EBI-73886">
        <id>Q04206</id>
    </interactant>
    <interactant intactId="EBI-714994">
        <id>Q99612</id>
        <label>KLF6</label>
    </interactant>
    <organismsDiffer>false</organismsDiffer>
    <experiments>6</experiments>
</comment>
<comment type="interaction">
    <interactant intactId="EBI-73886">
        <id>Q04206</id>
    </interactant>
    <interactant intactId="EBI-21591415">
        <id>P13473-2</id>
        <label>LAMP2</label>
    </interactant>
    <organismsDiffer>false</organismsDiffer>
    <experiments>3</experiments>
</comment>
<comment type="interaction">
    <interactant intactId="EBI-73886">
        <id>Q04206</id>
    </interactant>
    <interactant intactId="EBI-739696">
        <id>P25791</id>
        <label>LMO2</label>
    </interactant>
    <organismsDiffer>false</organismsDiffer>
    <experiments>3</experiments>
</comment>
<comment type="interaction">
    <interactant intactId="EBI-73886">
        <id>Q04206</id>
    </interactant>
    <interactant intactId="EBI-5324932">
        <id>Q9BQ69</id>
        <label>MACROD1</label>
    </interactant>
    <organismsDiffer>false</organismsDiffer>
    <experiments>7</experiments>
</comment>
<comment type="interaction">
    <interactant intactId="EBI-73886">
        <id>Q04206</id>
    </interactant>
    <interactant intactId="EBI-713543">
        <id>P53779</id>
        <label>MAPK10</label>
    </interactant>
    <organismsDiffer>false</organismsDiffer>
    <experiments>2</experiments>
</comment>
<comment type="interaction">
    <interactant intactId="EBI-73886">
        <id>Q04206</id>
    </interactant>
    <interactant intactId="EBI-9869387">
        <id>O00255-2</id>
        <label>MEN1</label>
    </interactant>
    <organismsDiffer>false</organismsDiffer>
    <experiments>4</experiments>
</comment>
<comment type="interaction">
    <interactant intactId="EBI-73886">
        <id>Q04206</id>
    </interactant>
    <interactant intactId="EBI-2007911">
        <id>Q16236</id>
        <label>NFE2L2</label>
    </interactant>
    <organismsDiffer>false</organismsDiffer>
    <experiments>5</experiments>
</comment>
<comment type="interaction">
    <interactant intactId="EBI-73886">
        <id>Q04206</id>
    </interactant>
    <interactant intactId="EBI-300010">
        <id>P19838</id>
        <label>NFKB1</label>
    </interactant>
    <organismsDiffer>false</organismsDiffer>
    <experiments>16</experiments>
</comment>
<comment type="interaction">
    <interactant intactId="EBI-73886">
        <id>Q04206</id>
    </interactant>
    <interactant intactId="EBI-697771">
        <id>PRO_0000030311</id>
        <label>NFKB1</label>
        <dbReference type="UniProtKB" id="P19838"/>
    </interactant>
    <organismsDiffer>false</organismsDiffer>
    <experiments>7</experiments>
</comment>
<comment type="interaction">
    <interactant intactId="EBI-73886">
        <id>Q04206</id>
    </interactant>
    <interactant intactId="EBI-307386">
        <id>P25963</id>
        <label>NFKBIA</label>
    </interactant>
    <organismsDiffer>false</organismsDiffer>
    <experiments>27</experiments>
</comment>
<comment type="interaction">
    <interactant intactId="EBI-73886">
        <id>Q04206</id>
    </interactant>
    <interactant intactId="EBI-352889">
        <id>Q15653</id>
        <label>NFKBIB</label>
    </interactant>
    <organismsDiffer>false</organismsDiffer>
    <experiments>9</experiments>
</comment>
<comment type="interaction">
    <interactant intactId="EBI-73886">
        <id>Q04206</id>
    </interactant>
    <interactant intactId="EBI-355098">
        <id>O00221</id>
        <label>NFKBIE</label>
    </interactant>
    <organismsDiffer>false</organismsDiffer>
    <experiments>3</experiments>
</comment>
<comment type="interaction">
    <interactant intactId="EBI-73886">
        <id>Q04206</id>
    </interactant>
    <interactant intactId="EBI-16085263">
        <id>P22736-1</id>
        <label>NR4A1</label>
    </interactant>
    <organismsDiffer>false</organismsDiffer>
    <experiments>3</experiments>
</comment>
<comment type="interaction">
    <interactant intactId="EBI-73886">
        <id>Q04206</id>
    </interactant>
    <interactant intactId="EBI-2862434">
        <id>Q96L73</id>
        <label>NSD1</label>
    </interactant>
    <organismsDiffer>false</organismsDiffer>
    <experiments>2</experiments>
</comment>
<comment type="interaction">
    <interactant intactId="EBI-73886">
        <id>Q04206</id>
    </interactant>
    <interactant intactId="EBI-539828">
        <id>O15294</id>
        <label>OGT</label>
    </interactant>
    <organismsDiffer>false</organismsDiffer>
    <experiments>2</experiments>
</comment>
<comment type="interaction">
    <interactant intactId="EBI-73886">
        <id>Q04206</id>
    </interactant>
    <interactant intactId="EBI-935824">
        <id>Q53EL6</id>
        <label>PDCD4</label>
    </interactant>
    <organismsDiffer>false</organismsDiffer>
    <experiments>6</experiments>
</comment>
<comment type="interaction">
    <interactant intactId="EBI-73886">
        <id>Q04206</id>
    </interactant>
    <interactant intactId="EBI-473160">
        <id>Q8N2W9</id>
        <label>PIAS4</label>
    </interactant>
    <organismsDiffer>false</organismsDiffer>
    <experiments>2</experiments>
</comment>
<comment type="interaction">
    <interactant intactId="EBI-73886">
        <id>Q04206</id>
    </interactant>
    <interactant intactId="EBI-712311">
        <id>P67775</id>
        <label>PPP2CA</label>
    </interactant>
    <organismsDiffer>false</organismsDiffer>
    <experiments>6</experiments>
</comment>
<comment type="interaction">
    <interactant intactId="EBI-73886">
        <id>Q04206</id>
    </interactant>
    <interactant intactId="EBI-302388">
        <id>P30153</id>
        <label>PPP2R1A</label>
    </interactant>
    <organismsDiffer>false</organismsDiffer>
    <experiments>2</experiments>
</comment>
<comment type="interaction">
    <interactant intactId="EBI-73886">
        <id>Q04206</id>
    </interactant>
    <interactant intactId="EBI-5280197">
        <id>O75400-2</id>
        <label>PRPF40A</label>
    </interactant>
    <organismsDiffer>false</organismsDiffer>
    <experiments>3</experiments>
</comment>
<comment type="interaction">
    <interactant intactId="EBI-73886">
        <id>Q04206</id>
    </interactant>
    <interactant intactId="EBI-286642">
        <id>P62826</id>
        <label>RAN</label>
    </interactant>
    <organismsDiffer>false</organismsDiffer>
    <experiments>3</experiments>
</comment>
<comment type="interaction">
    <interactant intactId="EBI-73886">
        <id>Q04206</id>
    </interactant>
    <interactant intactId="EBI-307352">
        <id>Q04864</id>
        <label>REL</label>
    </interactant>
    <organismsDiffer>false</organismsDiffer>
    <experiments>5</experiments>
</comment>
<comment type="interaction">
    <interactant intactId="EBI-73886">
        <id>Q04206</id>
    </interactant>
    <interactant intactId="EBI-73886">
        <id>Q04206</id>
        <label>RELA</label>
    </interactant>
    <organismsDiffer>false</organismsDiffer>
    <experiments>3</experiments>
</comment>
<comment type="interaction">
    <interactant intactId="EBI-73886">
        <id>Q04206</id>
    </interactant>
    <interactant intactId="EBI-351193">
        <id>P23396</id>
        <label>RPS3</label>
    </interactant>
    <organismsDiffer>false</organismsDiffer>
    <experiments>8</experiments>
</comment>
<comment type="interaction">
    <interactant intactId="EBI-73886">
        <id>Q04206</id>
    </interactant>
    <interactant intactId="EBI-1268586">
        <id>Q8WTS6</id>
        <label>SETD7</label>
    </interactant>
    <organismsDiffer>false</organismsDiffer>
    <experiments>12</experiments>
</comment>
<comment type="interaction">
    <interactant intactId="EBI-73886">
        <id>Q04206</id>
    </interactant>
    <interactant intactId="EBI-1802965">
        <id>Q96EB6</id>
        <label>SIRT1</label>
    </interactant>
    <organismsDiffer>false</organismsDiffer>
    <experiments>5</experiments>
</comment>
<comment type="interaction">
    <interactant intactId="EBI-73886">
        <id>Q04206</id>
    </interactant>
    <interactant intactId="EBI-477232">
        <id>Q8IXJ6</id>
        <label>SIRT2</label>
    </interactant>
    <organismsDiffer>false</organismsDiffer>
    <experiments>2</experiments>
</comment>
<comment type="interaction">
    <interactant intactId="EBI-73886">
        <id>Q04206</id>
    </interactant>
    <interactant intactId="EBI-712415">
        <id>Q8N6T7</id>
        <label>SIRT6</label>
    </interactant>
    <organismsDiffer>false</organismsDiffer>
    <experiments>4</experiments>
</comment>
<comment type="interaction">
    <interactant intactId="EBI-73886">
        <id>Q04206</id>
    </interactant>
    <interactant intactId="EBI-1045459">
        <id>O95863</id>
        <label>SNAI1</label>
    </interactant>
    <organismsDiffer>false</organismsDiffer>
    <experiments>5</experiments>
</comment>
<comment type="interaction">
    <interactant intactId="EBI-73886">
        <id>Q04206</id>
    </interactant>
    <interactant intactId="EBI-968198">
        <id>O15524</id>
        <label>SOCS1</label>
    </interactant>
    <organismsDiffer>false</organismsDiffer>
    <experiments>2</experiments>
</comment>
<comment type="interaction">
    <interactant intactId="EBI-73886">
        <id>Q04206</id>
    </interactant>
    <interactant intactId="EBI-518675">
        <id>P40763</id>
        <label>STAT3</label>
    </interactant>
    <organismsDiffer>false</organismsDiffer>
    <experiments>4</experiments>
</comment>
<comment type="interaction">
    <interactant intactId="EBI-73886">
        <id>Q04206</id>
    </interactant>
    <interactant intactId="EBI-372899">
        <id>Q13148</id>
        <label>TARDBP</label>
    </interactant>
    <organismsDiffer>false</organismsDiffer>
    <experiments>3</experiments>
</comment>
<comment type="interaction">
    <interactant intactId="EBI-73886">
        <id>Q04206</id>
    </interactant>
    <interactant intactId="EBI-727668">
        <id>P21980</id>
        <label>TGM2</label>
    </interactant>
    <organismsDiffer>false</organismsDiffer>
    <experiments>3</experiments>
</comment>
<comment type="interaction">
    <interactant intactId="EBI-73886">
        <id>Q04206</id>
    </interactant>
    <interactant intactId="EBI-77642">
        <id>Q13625</id>
        <label>TP53BP2</label>
    </interactant>
    <organismsDiffer>false</organismsDiffer>
    <experiments>4</experiments>
</comment>
<comment type="interaction">
    <interactant intactId="EBI-73886">
        <id>Q04206</id>
    </interactant>
    <interactant intactId="EBI-287091">
        <id>Q13625-2</id>
        <label>TP53BP2</label>
    </interactant>
    <organismsDiffer>false</organismsDiffer>
    <experiments>6</experiments>
</comment>
<comment type="interaction">
    <interactant intactId="EBI-73886">
        <id>Q04206</id>
    </interactant>
    <interactant intactId="EBI-3390054">
        <id>P0CG48</id>
        <label>UBC</label>
    </interactant>
    <organismsDiffer>false</organismsDiffer>
    <experiments>6</experiments>
</comment>
<comment type="interaction">
    <interactant intactId="EBI-73886">
        <id>Q04206</id>
    </interactant>
    <interactant intactId="EBI-741480">
        <id>Q9UMX0</id>
        <label>UBQLN1</label>
    </interactant>
    <organismsDiffer>false</organismsDiffer>
    <experiments>3</experiments>
</comment>
<comment type="interaction">
    <interactant intactId="EBI-73886">
        <id>Q04206</id>
    </interactant>
    <interactant intactId="EBI-357355">
        <id>Q9UBK9</id>
        <label>UXT</label>
    </interactant>
    <organismsDiffer>false</organismsDiffer>
    <experiments>5</experiments>
</comment>
<comment type="interaction">
    <interactant intactId="EBI-73886">
        <id>Q04206</id>
    </interactant>
    <interactant intactId="EBI-25900580">
        <id>Q9Y649</id>
    </interactant>
    <organismsDiffer>false</organismsDiffer>
    <experiments>3</experiments>
</comment>
<comment type="interaction">
    <interactant intactId="EBI-73886">
        <id>Q04206</id>
    </interactant>
    <interactant intactId="EBI-6260864">
        <id>Q9ESU6</id>
        <label>Brd4</label>
    </interactant>
    <organismsDiffer>true</organismsDiffer>
    <experiments>6</experiments>
</comment>
<comment type="interaction">
    <interactant intactId="EBI-73886">
        <id>Q04206</id>
    </interactant>
    <interactant intactId="EBI-6933128">
        <id>O41974</id>
        <label>GAMMAHV.ORF73</label>
    </interactant>
    <organismsDiffer>true</organismsDiffer>
    <experiments>3</experiments>
</comment>
<comment type="interaction">
    <interactant intactId="EBI-73886">
        <id>Q04206</id>
    </interactant>
    <interactant intactId="EBI-15626132">
        <id>Q8VIM5-1</id>
        <label>Myocd</label>
    </interactant>
    <organismsDiffer>true</organismsDiffer>
    <experiments>2</experiments>
</comment>
<comment type="interaction">
    <interactant intactId="EBI-73886">
        <id>Q04206</id>
    </interactant>
    <interactant intactId="EBI-10039193">
        <id>Q8X834</id>
        <label>nleC</label>
    </interactant>
    <organismsDiffer>true</organismsDiffer>
    <experiments>2</experiments>
</comment>
<comment type="interaction">
    <interactant intactId="EBI-73886">
        <id>Q04206</id>
    </interactant>
    <interactant intactId="EBI-26357571">
        <id>B3CRR2</id>
        <label>OTT_0753</label>
    </interactant>
    <organismsDiffer>true</organismsDiffer>
    <experiments>3</experiments>
</comment>
<comment type="interaction">
    <interactant intactId="EBI-73886">
        <id>Q04206</id>
    </interactant>
    <interactant intactId="EBI-26357538">
        <id>B3CTB0</id>
        <label>OTT_1912</label>
    </interactant>
    <organismsDiffer>true</organismsDiffer>
    <experiments>2</experiments>
</comment>
<comment type="interaction">
    <interactant intactId="EBI-73886">
        <id>Q04206</id>
    </interactant>
    <interactant intactId="EBI-3650423">
        <id>P0C774</id>
        <label>P/V</label>
    </interactant>
    <organismsDiffer>true</organismsDiffer>
    <experiments>3</experiments>
</comment>
<comment type="interaction">
    <interactant intactId="EBI-73886">
        <id>Q04206</id>
    </interactant>
    <interactant intactId="EBI-2846298">
        <id>P69976</id>
        <label>sctL</label>
    </interactant>
    <organismsDiffer>true</organismsDiffer>
    <experiments>2</experiments>
</comment>
<comment type="interaction">
    <interactant intactId="EBI-73886">
        <id>Q04206</id>
    </interactant>
    <interactant intactId="EBI-1029310">
        <id>P10226</id>
        <label>UL42</label>
    </interactant>
    <organismsDiffer>true</organismsDiffer>
    <experiments>6</experiments>
</comment>
<comment type="interaction">
    <interactant intactId="EBI-73886">
        <id>Q04206</id>
    </interactant>
    <interactant intactId="EBI-2840013">
        <id>P31491</id>
        <label>yerA</label>
    </interactant>
    <organismsDiffer>true</organismsDiffer>
    <experiments>2</experiments>
</comment>
<comment type="interaction">
    <interactant intactId="EBI-73886">
        <id>Q04206</id>
    </interactant>
    <interactant intactId="EBI-20592225">
        <id>A0A384KL23</id>
        <label>YPO2940</label>
    </interactant>
    <organismsDiffer>true</organismsDiffer>
    <experiments>2</experiments>
</comment>
<comment type="interaction">
    <interactant intactId="EBI-73886">
        <id>Q04206</id>
    </interactant>
    <interactant intactId="EBI-20592206">
        <id>A0A2U2H0Y9</id>
        <label>YPO3877</label>
    </interactant>
    <organismsDiffer>true</organismsDiffer>
    <experiments>2</experiments>
</comment>
<comment type="interaction">
    <interactant intactId="EBI-10826776">
        <id>Q04206-1</id>
    </interactant>
    <interactant intactId="EBI-12695166">
        <id>Q9NPC8</id>
        <label>SIX2</label>
    </interactant>
    <organismsDiffer>false</organismsDiffer>
    <experiments>2</experiments>
</comment>
<comment type="interaction">
    <interactant intactId="EBI-10826776">
        <id>Q04206-1</id>
    </interactant>
    <interactant intactId="EBI-15626132">
        <id>Q8VIM5-1</id>
        <label>Myocd</label>
    </interactant>
    <organismsDiffer>true</organismsDiffer>
    <experiments>2</experiments>
</comment>
<comment type="interaction">
    <interactant intactId="EBI-289947">
        <id>Q04206-2</id>
    </interactant>
    <interactant intactId="EBI-307386">
        <id>P25963</id>
        <label>NFKBIA</label>
    </interactant>
    <organismsDiffer>false</organismsDiffer>
    <experiments>2</experiments>
</comment>
<comment type="interaction">
    <interactant intactId="EBI-289947">
        <id>Q04206-2</id>
    </interactant>
    <interactant intactId="EBI-307352">
        <id>Q04864</id>
        <label>REL</label>
    </interactant>
    <organismsDiffer>false</organismsDiffer>
    <experiments>2</experiments>
</comment>
<comment type="interaction">
    <interactant intactId="EBI-289947">
        <id>Q04206-2</id>
    </interactant>
    <interactant intactId="EBI-357837">
        <id>Q01201</id>
        <label>RELB</label>
    </interactant>
    <organismsDiffer>false</organismsDiffer>
    <experiments>2</experiments>
</comment>
<comment type="interaction">
    <interactant intactId="EBI-10223388">
        <id>Q04206-3</id>
    </interactant>
    <interactant intactId="EBI-400434">
        <id>P35637</id>
        <label>FUS</label>
    </interactant>
    <organismsDiffer>false</organismsDiffer>
    <experiments>3</experiments>
</comment>
<comment type="interaction">
    <interactant intactId="EBI-10223388">
        <id>Q04206-3</id>
    </interactant>
    <interactant intactId="EBI-307352">
        <id>Q04864</id>
        <label>REL</label>
    </interactant>
    <organismsDiffer>false</organismsDiffer>
    <experiments>3</experiments>
</comment>
<comment type="interaction">
    <interactant intactId="EBI-10223388">
        <id>Q04206-3</id>
    </interactant>
    <interactant intactId="EBI-533224">
        <id>P15884</id>
        <label>TCF4</label>
    </interactant>
    <organismsDiffer>false</organismsDiffer>
    <experiments>3</experiments>
</comment>
<comment type="subcellular location">
    <subcellularLocation>
        <location evidence="16 24 34 36 44">Nucleus</location>
    </subcellularLocation>
    <subcellularLocation>
        <location evidence="16 34 36 43 46">Cytoplasm</location>
    </subcellularLocation>
    <text evidence="16 34 36 37">Nuclear, but also found in the cytoplasm in an inactive form complexed to an inhibitor (I-kappa-B) (PubMed:1493333). Colocalized with DDX1 in the nucleus upon TNF-alpha induction (PubMed:19058135). Colocalizes with GFI1 in the nucleus after LPS stimulation (PubMed:20547752). Translocation to the nucleus is impaired in L.monocytogenes infection (PubMed:20855622).</text>
</comment>
<comment type="alternative products">
    <event type="alternative splicing"/>
    <isoform>
        <id>Q04206-1</id>
        <name>1</name>
        <name>p65</name>
        <sequence type="displayed"/>
    </isoform>
    <isoform>
        <id>Q04206-2</id>
        <name>2</name>
        <name>p65 delta 2</name>
        <sequence type="described" ref="VSP_005587 VSP_005588"/>
    </isoform>
    <isoform>
        <id>Q04206-3</id>
        <name>3</name>
        <name>p65 delta</name>
        <sequence type="described" ref="VSP_012031"/>
    </isoform>
    <isoform>
        <id>Q04206-4</id>
        <name>4</name>
        <sequence type="described" ref="VSP_031245"/>
    </isoform>
</comment>
<comment type="domain">
    <text evidence="2">The transcriptional activation domain 3/TA3 does not participate in the direct transcriptional activity of RELA but is involved in the control by RELA of the accessibility of target gene promoters. Mediates interaction with ZBTB7A.</text>
</comment>
<comment type="domain">
    <text evidence="2 30">The transcriptional activation domain 1/TA1 and the transcriptional activation domain 2/TA2 have direct transcriptional activation properties (By similarity). The 9aaTAD motif found within the transcriptional activation domain 2 is a conserved motif present in a large number of transcription factors that is required for their transcriptional transactivation activity (PubMed:17467953).</text>
</comment>
<comment type="PTM">
    <text evidence="18 39 52">Ubiquitinated by RNF182, leading to its proteasomal degradation (PubMed:31432514). Degradation is required for termination of NF-kappa-B response. Polyubiquitinated via 'Lys-29'-linked ubiquitin; leading to lysosomal degradation (PubMed:21518757).</text>
</comment>
<comment type="PTM">
    <text evidence="2 38">Monomethylated at Lys-310 by SETD6 (PubMed:21515635). Monomethylation at Lys-310 is recognized by the ANK repeats of EHMT1 and promotes the formation of repressed chromatin at target genes, leading to down-regulation of NF-kappa-B transcription factor activity. Phosphorylation at Ser-311 disrupts the interaction with EHMT1 without preventing monomethylation at Lys-310 and relieves the repression of target genes (By similarity).</text>
</comment>
<comment type="PTM">
    <text evidence="1 7 9 10 12 13 15 17 20 22 25 26 27 28 35">Phosphorylation at Ser-311 disrupts the interaction with EHMT1 and promotes transcription factor activity (By similarity). Phosphorylation on Ser-536 stimulates acetylation on Lys-310 and interaction with CBP; the phosphorylated and acetylated forms show enhanced transcriptional activity. Phosphorylation at Ser-276 by RPS6KA4 and RPS6KA5 promotes its transactivation and transcriptional activities.</text>
</comment>
<comment type="PTM">
    <text evidence="43">Phosphorylation at Ser-75 by herpes simplex virus 1/HHV-1 inhibits NF-kappa-B activation.</text>
</comment>
<comment type="PTM">
    <text evidence="11 12 26 28 35">Reversibly acetylated; the acetylation seems to be mediated by CBP, the deacetylation by HDAC3 and SIRT2. Acetylation at Lys-122 enhances DNA binding and impairs association with NFKBIA. Acetylation at Lys-310 is required for full transcriptional activity in the absence of effects on DNA binding and NFKBIA association. Acetylation at Lys-310 promotes interaction with BRD4. Acetylation can also lower DNA-binding and results in nuclear export. Interaction with BRMS1 promotes deacetylation of Lys-310. Lys-310 is deacetylated by SIRT2.</text>
</comment>
<comment type="PTM">
    <text evidence="1">S-nitrosylation of Cys-38 inactivates the enzyme activity.</text>
</comment>
<comment type="PTM">
    <text evidence="1">Sulfhydration at Cys-38 mediates the anti-apoptotic activity by promoting the interaction with RPS3 and activating the transcription factor activity.</text>
</comment>
<comment type="PTM">
    <text evidence="41">Sumoylation by PIAS3 negatively regulates DNA-bound activated NF-kappa-B.</text>
</comment>
<comment type="PTM">
    <text evidence="33">Proteolytically cleaved within a conserved N-terminus region required for base-specific contact with DNA in a CPEN1-mediated manner, and hence inhibits NF-kappa-B transcriptional activity (PubMed:18212740).</text>
</comment>
<comment type="disease">
    <text evidence="42">A chromosomal aberration involving ZFTA is found in more than two-thirds of supratentorial ependymomas. Translocation with ZFTA produces a ZFTA-RELA fusion protein. ZFTA-RELA translocations are potent oncogenes that probably transform neural stem cells by driving an aberrant NF-kappa-B transcription program (PubMed:24553141).</text>
</comment>
<comment type="disease" evidence="47">
    <disease id="DI-05466">
        <name>Autoinflammatory disease, familial, Behcet-like 3</name>
        <acronym>AIFBL3</acronym>
        <description>An autosomal dominant, mucocutaneous disease characterized by chronic mucosal lesions, in absence of recurrent infections.</description>
        <dbReference type="MIM" id="618287"/>
    </disease>
    <text>The disease may be caused by variants affecting the gene represented in this entry.</text>
</comment>
<comment type="online information" name="Atlas of Genetics and Cytogenetics in Oncology and Haematology">
    <link uri="https://atlasgeneticsoncology.org/gene/325/RELA"/>
</comment>
<feature type="chain" id="PRO_0000205169" description="Transcription factor p65">
    <location>
        <begin position="1"/>
        <end position="551"/>
    </location>
</feature>
<feature type="domain" description="RHD" evidence="5">
    <location>
        <begin position="19"/>
        <end position="306"/>
    </location>
</feature>
<feature type="region of interest" description="Disordered" evidence="6">
    <location>
        <begin position="309"/>
        <end position="348"/>
    </location>
</feature>
<feature type="region of interest" description="Transcriptional activation domain 3" evidence="2">
    <location>
        <begin position="342"/>
        <end position="389"/>
    </location>
</feature>
<feature type="region of interest" description="Transcriptional activation domain 1" evidence="29">
    <location>
        <begin position="415"/>
        <end position="476"/>
    </location>
</feature>
<feature type="region of interest" description="Disordered" evidence="6">
    <location>
        <begin position="506"/>
        <end position="530"/>
    </location>
</feature>
<feature type="region of interest" description="Transcriptional activation domain 2" evidence="2">
    <location>
        <begin position="520"/>
        <end position="551"/>
    </location>
</feature>
<feature type="short sequence motif" description="Nuclear localization signal" evidence="4">
    <location>
        <begin position="301"/>
        <end position="304"/>
    </location>
</feature>
<feature type="short sequence motif" description="9aaTAD" evidence="4">
    <location>
        <begin position="536"/>
        <end position="544"/>
    </location>
</feature>
<feature type="compositionally biased region" description="Low complexity" evidence="6">
    <location>
        <begin position="519"/>
        <end position="528"/>
    </location>
</feature>
<feature type="modified residue" description="N-acetylmethionine" evidence="60">
    <location>
        <position position="1"/>
    </location>
</feature>
<feature type="modified residue" description="Cysteine persulfide; alternate" evidence="1">
    <location>
        <position position="38"/>
    </location>
</feature>
<feature type="modified residue" description="S-nitrosocysteine; alternate" evidence="2">
    <location>
        <position position="38"/>
    </location>
</feature>
<feature type="modified residue" description="(Microbial infection) Phosphoserine" evidence="43">
    <location>
        <position position="75"/>
    </location>
</feature>
<feature type="modified residue" description="N6-acetyllysine; by PCAF and EP300; alternate" evidence="11">
    <location>
        <position position="122"/>
    </location>
</feature>
<feature type="modified residue" description="N6-acetyllysine; by PCAF and EP300; alternate" evidence="11">
    <location>
        <position position="123"/>
    </location>
</feature>
<feature type="modified residue" description="N6-acetyllysine" evidence="12">
    <location>
        <position position="218"/>
    </location>
</feature>
<feature type="modified residue" description="N6-acetyllysine" evidence="12">
    <location>
        <position position="221"/>
    </location>
</feature>
<feature type="modified residue" description="Phosphothreonine" evidence="15">
    <location>
        <position position="254"/>
    </location>
</feature>
<feature type="modified residue" description="Phosphoserine; by RPS6KA4 and RPS6KA5" evidence="13">
    <location>
        <position position="276"/>
    </location>
</feature>
<feature type="modified residue" description="Phosphoserine" evidence="58">
    <location>
        <position position="281"/>
    </location>
</feature>
<feature type="modified residue" description="N6-acetyllysine; alternate" evidence="12 26 28 35 59">
    <location>
        <position position="310"/>
    </location>
</feature>
<feature type="modified residue" description="N6-methyllysine; by SETD6; alternate" evidence="2">
    <location>
        <position position="310"/>
    </location>
</feature>
<feature type="modified residue" description="Phosphoserine; by PKC/PRKCZ" evidence="2">
    <location>
        <position position="311"/>
    </location>
</feature>
<feature type="modified residue" description="Phosphothreonine" evidence="17">
    <location>
        <position position="435"/>
    </location>
</feature>
<feature type="modified residue" description="Phosphoserine; by IKKB and IKKE" evidence="25 27">
    <location>
        <position position="468"/>
    </location>
</feature>
<feature type="modified residue" description="Phosphothreonine; by CHEK1" evidence="22">
    <location>
        <position position="505"/>
    </location>
</feature>
<feature type="modified residue" description="Phosphoserine; by CK2" evidence="9">
    <location>
        <position position="529"/>
    </location>
</feature>
<feature type="modified residue" description="Phosphoserine; by IKKB" evidence="7 32">
    <location>
        <position position="536"/>
    </location>
</feature>
<feature type="cross-link" description="Glycyl lysine isopeptide (Lys-Gly) (interchain with G-Cter in SUMO3)" evidence="41">
    <location>
        <position position="37"/>
    </location>
</feature>
<feature type="cross-link" description="Glycyl lysine isopeptide (Lys-Gly) (interchain with G-Cter in SUMO3); alternate">
    <location>
        <position position="122"/>
    </location>
</feature>
<feature type="cross-link" description="Glycyl lysine isopeptide (Lys-Gly) (interchain with G-Cter in SUMO3); alternate">
    <location>
        <position position="123"/>
    </location>
</feature>
<feature type="splice variant" id="VSP_005587" description="In isoform 2." evidence="56">
    <location>
        <begin position="13"/>
        <end position="25"/>
    </location>
</feature>
<feature type="splice variant" id="VSP_031245" description="In isoform 4." evidence="54">
    <location>
        <begin position="143"/>
        <end position="145"/>
    </location>
</feature>
<feature type="splice variant" id="VSP_012031" description="In isoform 3." evidence="55">
    <location>
        <begin position="222"/>
        <end position="231"/>
    </location>
</feature>
<feature type="splice variant" id="VSP_005588" description="In isoform 2." evidence="56">
    <location>
        <position position="506"/>
    </location>
</feature>
<feature type="sequence variant" id="VAR_081858" description="Found in a patient diagnosed with autoimmune lymphoproliferative syndrome; uncertain significance." evidence="49">
    <location>
        <begin position="246"/>
        <end position="549"/>
    </location>
</feature>
<feature type="mutagenesis site" description="Abolishes interaction with PIN1." evidence="15">
    <original>T</original>
    <variation>A</variation>
    <location>
        <position position="254"/>
    </location>
</feature>
<feature type="mutagenesis site" description="Loss of phosphorylation." evidence="13">
    <original>S</original>
    <variation>C</variation>
    <location>
        <position position="276"/>
    </location>
</feature>
<feature type="sequence conflict" description="In Ref. 2; CAA80524." evidence="57" ref="2">
    <original>E</original>
    <variation>R</variation>
    <location>
        <position position="49"/>
    </location>
</feature>
<feature type="sequence conflict" description="In Ref. 1; AAA36408." evidence="57" ref="1">
    <original>S</original>
    <variation>P</variation>
    <location>
        <position position="180"/>
    </location>
</feature>
<feature type="sequence conflict" description="In Ref. 2; CAA80524." evidence="57" ref="2">
    <original>QISQASALA</original>
    <variation>RSARPRLG</variation>
    <location>
        <begin position="372"/>
        <end position="380"/>
    </location>
</feature>
<feature type="strand" evidence="61">
    <location>
        <begin position="21"/>
        <end position="25"/>
    </location>
</feature>
<feature type="strand" evidence="61">
    <location>
        <begin position="30"/>
        <end position="32"/>
    </location>
</feature>
<feature type="strand" evidence="61">
    <location>
        <begin position="39"/>
        <end position="41"/>
    </location>
</feature>
<feature type="strand" evidence="61">
    <location>
        <begin position="53"/>
        <end position="55"/>
    </location>
</feature>
<feature type="strand" evidence="61">
    <location>
        <begin position="60"/>
        <end position="63"/>
    </location>
</feature>
<feature type="strand" evidence="61">
    <location>
        <begin position="68"/>
        <end position="80"/>
    </location>
</feature>
<feature type="strand" evidence="61">
    <location>
        <begin position="87"/>
        <end position="92"/>
    </location>
</feature>
<feature type="strand" evidence="61">
    <location>
        <begin position="97"/>
        <end position="104"/>
    </location>
</feature>
<feature type="strand" evidence="62">
    <location>
        <begin position="109"/>
        <end position="112"/>
    </location>
</feature>
<feature type="strand" evidence="61">
    <location>
        <begin position="117"/>
        <end position="119"/>
    </location>
</feature>
<feature type="helix" evidence="62">
    <location>
        <begin position="123"/>
        <end position="125"/>
    </location>
</feature>
<feature type="helix" evidence="61">
    <location>
        <begin position="126"/>
        <end position="129"/>
    </location>
</feature>
<feature type="turn" evidence="61">
    <location>
        <begin position="130"/>
        <end position="137"/>
    </location>
</feature>
<feature type="turn" evidence="62">
    <location>
        <begin position="145"/>
        <end position="148"/>
    </location>
</feature>
<feature type="strand" evidence="61">
    <location>
        <begin position="156"/>
        <end position="166"/>
    </location>
</feature>
<feature type="strand" evidence="61">
    <location>
        <begin position="168"/>
        <end position="173"/>
    </location>
</feature>
<feature type="strand" evidence="61">
    <location>
        <begin position="183"/>
        <end position="188"/>
    </location>
</feature>
<feature type="strand" evidence="61">
    <location>
        <begin position="196"/>
        <end position="200"/>
    </location>
</feature>
<feature type="strand" evidence="61">
    <location>
        <begin position="202"/>
        <end position="205"/>
    </location>
</feature>
<feature type="strand" evidence="61">
    <location>
        <begin position="211"/>
        <end position="217"/>
    </location>
</feature>
<feature type="strand" evidence="61">
    <location>
        <begin position="225"/>
        <end position="230"/>
    </location>
</feature>
<feature type="strand" evidence="61">
    <location>
        <begin position="233"/>
        <end position="238"/>
    </location>
</feature>
<feature type="helix" evidence="61">
    <location>
        <begin position="241"/>
        <end position="243"/>
    </location>
</feature>
<feature type="turn" evidence="61">
    <location>
        <begin position="246"/>
        <end position="248"/>
    </location>
</feature>
<feature type="strand" evidence="61">
    <location>
        <begin position="249"/>
        <end position="253"/>
    </location>
</feature>
<feature type="strand" evidence="62">
    <location>
        <begin position="258"/>
        <end position="260"/>
    </location>
</feature>
<feature type="strand" evidence="61">
    <location>
        <begin position="266"/>
        <end position="273"/>
    </location>
</feature>
<feature type="turn" evidence="61">
    <location>
        <begin position="275"/>
        <end position="277"/>
    </location>
</feature>
<feature type="strand" evidence="61">
    <location>
        <begin position="284"/>
        <end position="289"/>
    </location>
</feature>
<feature type="helix" evidence="61">
    <location>
        <begin position="294"/>
        <end position="302"/>
    </location>
</feature>
<feature type="helix" evidence="61">
    <location>
        <begin position="306"/>
        <end position="312"/>
    </location>
</feature>
<feature type="strand" evidence="63">
    <location>
        <begin position="527"/>
        <end position="534"/>
    </location>
</feature>
<feature type="turn" evidence="63">
    <location>
        <begin position="535"/>
        <end position="540"/>
    </location>
</feature>
<feature type="helix" evidence="63">
    <location>
        <begin position="542"/>
        <end position="550"/>
    </location>
</feature>
<sequence>MDELFPLIFPAEPAQASGPYVEIIEQPKQRGMRFRYKCEGRSAGSIPGERSTDTTKTHPTIKINGYTGPGTVRISLVTKDPPHRPHPHELVGKDCRDGFYEAELCPDRCIHSFQNLGIQCVKKRDLEQAISQRIQTNNNPFQVPIEEQRGDYDLNAVRLCFQVTVRDPSGRPLRLPPVLSHPIFDNRAPNTAELKICRVNRNSGSCLGGDEIFLLCDKVQKEDIEVYFTGPGWEARGSFSQADVHRQVAIVFRTPPYADPSLQAPVRVSMQLRRPSDRELSEPMEFQYLPDTDDRHRIEEKRKRTYETFKSIMKKSPFSGPTDPRPPPRRIAVPSRSSASVPKPAPQPYPFTSSLSTINYDEFPTMVFPSGQISQASALAPAPPQVLPQAPAPAPAPAMVSALAQAPAPVPVLAPGPPQAVAPPAPKPTQAGEGTLSEALLQLQFDDEDLGALLGNSTDPAVFTDLASVDNSEFQQLLNQGIPVAPHTTEPMLMEYPEAITRLVTGAQRPPDPAPAPLGAPGLPNGLLSGDEDFSSIADMDFSALLSQISS</sequence>
<protein>
    <recommendedName>
        <fullName>Transcription factor p65</fullName>
    </recommendedName>
    <alternativeName>
        <fullName>Nuclear factor NF-kappa-B p65 subunit</fullName>
    </alternativeName>
    <alternativeName>
        <fullName>Nuclear factor of kappa light polypeptide gene enhancer in B-cells 3</fullName>
    </alternativeName>
</protein>
<name>TF65_HUMAN</name>
<accession>Q04206</accession>
<accession>Q6GTV1</accession>
<accession>Q6SLK1</accession>
<gene>
    <name type="primary">RELA</name>
    <name type="synonym">NFKB3</name>
</gene>
<dbReference type="EMBL" id="M62399">
    <property type="protein sequence ID" value="AAA36408.1"/>
    <property type="molecule type" value="mRNA"/>
</dbReference>
<dbReference type="EMBL" id="Z22948">
    <property type="protein sequence ID" value="CAA80524.2"/>
    <property type="molecule type" value="Genomic_DNA"/>
</dbReference>
<dbReference type="EMBL" id="Z22949">
    <property type="protein sequence ID" value="CAA80524.2"/>
    <property type="status" value="JOINED"/>
    <property type="molecule type" value="Genomic_DNA"/>
</dbReference>
<dbReference type="EMBL" id="Z22953">
    <property type="protein sequence ID" value="CAA80524.2"/>
    <property type="status" value="JOINED"/>
    <property type="molecule type" value="Genomic_DNA"/>
</dbReference>
<dbReference type="EMBL" id="Z22950">
    <property type="protein sequence ID" value="CAA80524.2"/>
    <property type="status" value="JOINED"/>
    <property type="molecule type" value="Genomic_DNA"/>
</dbReference>
<dbReference type="EMBL" id="Z22951">
    <property type="protein sequence ID" value="CAA80524.2"/>
    <property type="status" value="JOINED"/>
    <property type="molecule type" value="Genomic_DNA"/>
</dbReference>
<dbReference type="EMBL" id="L19067">
    <property type="protein sequence ID" value="AAA20946.1"/>
    <property type="molecule type" value="mRNA"/>
</dbReference>
<dbReference type="EMBL" id="BC033522">
    <property type="protein sequence ID" value="AAH33522.1"/>
    <property type="molecule type" value="mRNA"/>
</dbReference>
<dbReference type="EMBL" id="AY455868">
    <property type="protein sequence ID" value="AAR13863.1"/>
    <property type="molecule type" value="Genomic_DNA"/>
</dbReference>
<dbReference type="CCDS" id="CCDS31609.1">
    <molecule id="Q04206-1"/>
</dbReference>
<dbReference type="CCDS" id="CCDS44651.1">
    <molecule id="Q04206-4"/>
</dbReference>
<dbReference type="PIR" id="A40851">
    <property type="entry name" value="A40851"/>
</dbReference>
<dbReference type="PIR" id="I53719">
    <property type="entry name" value="I53719"/>
</dbReference>
<dbReference type="PIR" id="S51782">
    <property type="entry name" value="A42017"/>
</dbReference>
<dbReference type="RefSeq" id="NP_001138610.1">
    <molecule id="Q04206-4"/>
    <property type="nucleotide sequence ID" value="NM_001145138.2"/>
</dbReference>
<dbReference type="RefSeq" id="NP_001230913.1">
    <property type="nucleotide sequence ID" value="NM_001243984.1"/>
</dbReference>
<dbReference type="RefSeq" id="NP_068810.3">
    <molecule id="Q04206-1"/>
    <property type="nucleotide sequence ID" value="NM_021975.3"/>
</dbReference>
<dbReference type="PDB" id="1NFI">
    <property type="method" value="X-ray"/>
    <property type="resolution" value="2.70 A"/>
    <property type="chains" value="A/C=20-320"/>
</dbReference>
<dbReference type="PDB" id="2LSP">
    <property type="method" value="NMR"/>
    <property type="chains" value="A=304-316"/>
</dbReference>
<dbReference type="PDB" id="2O61">
    <property type="method" value="X-ray"/>
    <property type="resolution" value="2.80 A"/>
    <property type="chains" value="A=20-291"/>
</dbReference>
<dbReference type="PDB" id="3GUT">
    <property type="method" value="X-ray"/>
    <property type="resolution" value="3.59 A"/>
    <property type="chains" value="A/C/E/G=20-291"/>
</dbReference>
<dbReference type="PDB" id="3QXY">
    <property type="method" value="X-ray"/>
    <property type="resolution" value="2.09 A"/>
    <property type="chains" value="P/Q=302-316"/>
</dbReference>
<dbReference type="PDB" id="3RC0">
    <property type="method" value="X-ray"/>
    <property type="resolution" value="2.19 A"/>
    <property type="chains" value="P/Q=302-316"/>
</dbReference>
<dbReference type="PDB" id="4KV1">
    <property type="method" value="X-ray"/>
    <property type="resolution" value="1.50 A"/>
    <property type="chains" value="C/D=308-314"/>
</dbReference>
<dbReference type="PDB" id="4KV4">
    <property type="method" value="X-ray"/>
    <property type="resolution" value="2.00 A"/>
    <property type="chains" value="B=308-314"/>
</dbReference>
<dbReference type="PDB" id="5U4K">
    <property type="method" value="NMR"/>
    <property type="chains" value="B=521-551"/>
</dbReference>
<dbReference type="PDB" id="5URN">
    <property type="method" value="NMR"/>
    <property type="chains" value="B=521-551"/>
</dbReference>
<dbReference type="PDB" id="6NV2">
    <property type="method" value="X-ray"/>
    <property type="resolution" value="1.13 A"/>
    <property type="chains" value="P=39-51"/>
</dbReference>
<dbReference type="PDB" id="6QHL">
    <property type="method" value="X-ray"/>
    <property type="resolution" value="1.20 A"/>
    <property type="chains" value="P=38-51"/>
</dbReference>
<dbReference type="PDB" id="6QHM">
    <property type="method" value="X-ray"/>
    <property type="resolution" value="1.25 A"/>
    <property type="chains" value="P=275-287"/>
</dbReference>
<dbReference type="PDB" id="6YOW">
    <property type="method" value="X-ray"/>
    <property type="resolution" value="1.23 A"/>
    <property type="chains" value="P=39-51"/>
</dbReference>
<dbReference type="PDB" id="6YOX">
    <property type="method" value="X-ray"/>
    <property type="resolution" value="2.05 A"/>
    <property type="chains" value="P=39-51"/>
</dbReference>
<dbReference type="PDB" id="6YOY">
    <property type="method" value="X-ray"/>
    <property type="resolution" value="1.80 A"/>
    <property type="chains" value="P=39-51"/>
</dbReference>
<dbReference type="PDB" id="6YP2">
    <property type="method" value="X-ray"/>
    <property type="resolution" value="1.80 A"/>
    <property type="chains" value="P=39-51"/>
</dbReference>
<dbReference type="PDB" id="6YP3">
    <property type="method" value="X-ray"/>
    <property type="resolution" value="1.80 A"/>
    <property type="chains" value="P=39-51"/>
</dbReference>
<dbReference type="PDB" id="6YP8">
    <property type="method" value="X-ray"/>
    <property type="resolution" value="1.80 A"/>
    <property type="chains" value="P=39-51"/>
</dbReference>
<dbReference type="PDB" id="6YPL">
    <property type="method" value="X-ray"/>
    <property type="resolution" value="1.80 A"/>
    <property type="chains" value="P=39-51"/>
</dbReference>
<dbReference type="PDB" id="6YPY">
    <property type="method" value="X-ray"/>
    <property type="resolution" value="1.40 A"/>
    <property type="chains" value="P=39-51"/>
</dbReference>
<dbReference type="PDB" id="6YQ2">
    <property type="method" value="X-ray"/>
    <property type="resolution" value="1.40 A"/>
    <property type="chains" value="P=39-51"/>
</dbReference>
<dbReference type="PDB" id="7BI3">
    <property type="method" value="X-ray"/>
    <property type="resolution" value="1.20 A"/>
    <property type="chains" value="P=39-51"/>
</dbReference>
<dbReference type="PDB" id="7BIQ">
    <property type="method" value="X-ray"/>
    <property type="resolution" value="1.20 A"/>
    <property type="chains" value="P=39-51"/>
</dbReference>
<dbReference type="PDB" id="7BIW">
    <property type="method" value="X-ray"/>
    <property type="resolution" value="1.20 A"/>
    <property type="chains" value="P=39-51"/>
</dbReference>
<dbReference type="PDB" id="7BIY">
    <property type="method" value="X-ray"/>
    <property type="resolution" value="1.80 A"/>
    <property type="chains" value="P=39-51"/>
</dbReference>
<dbReference type="PDB" id="7BJB">
    <property type="method" value="X-ray"/>
    <property type="resolution" value="1.80 A"/>
    <property type="chains" value="P=39-51"/>
</dbReference>
<dbReference type="PDB" id="7BJF">
    <property type="method" value="X-ray"/>
    <property type="resolution" value="1.40 A"/>
    <property type="chains" value="P=39-51"/>
</dbReference>
<dbReference type="PDB" id="7BJL">
    <property type="method" value="X-ray"/>
    <property type="resolution" value="1.40 A"/>
    <property type="chains" value="P=39-51"/>
</dbReference>
<dbReference type="PDB" id="7BJW">
    <property type="method" value="X-ray"/>
    <property type="resolution" value="1.40 A"/>
    <property type="chains" value="P=39-51"/>
</dbReference>
<dbReference type="PDB" id="7BKH">
    <property type="method" value="X-ray"/>
    <property type="resolution" value="1.40 A"/>
    <property type="chains" value="P=39-51"/>
</dbReference>
<dbReference type="PDB" id="7LET">
    <property type="method" value="X-ray"/>
    <property type="resolution" value="2.40 A"/>
    <property type="chains" value="C=294-315"/>
</dbReference>
<dbReference type="PDB" id="7LEU">
    <property type="method" value="X-ray"/>
    <property type="resolution" value="2.82 A"/>
    <property type="chains" value="B/C=294-315"/>
</dbReference>
<dbReference type="PDB" id="7LF4">
    <property type="method" value="X-ray"/>
    <property type="resolution" value="2.85 A"/>
    <property type="chains" value="D/E=294-315"/>
</dbReference>
<dbReference type="PDB" id="7NJ9">
    <property type="method" value="X-ray"/>
    <property type="resolution" value="1.40 A"/>
    <property type="chains" value="P=39-51"/>
</dbReference>
<dbReference type="PDB" id="7NJB">
    <property type="method" value="X-ray"/>
    <property type="resolution" value="1.40 A"/>
    <property type="chains" value="P=39-51"/>
</dbReference>
<dbReference type="PDB" id="7NK3">
    <property type="method" value="X-ray"/>
    <property type="resolution" value="1.40 A"/>
    <property type="chains" value="P=39-51"/>
</dbReference>
<dbReference type="PDB" id="7NK5">
    <property type="method" value="X-ray"/>
    <property type="resolution" value="1.40 A"/>
    <property type="chains" value="P=39-51"/>
</dbReference>
<dbReference type="PDB" id="7NLA">
    <property type="method" value="X-ray"/>
    <property type="resolution" value="1.40 A"/>
    <property type="chains" value="P=39-51"/>
</dbReference>
<dbReference type="PDB" id="7NLE">
    <property type="method" value="X-ray"/>
    <property type="resolution" value="1.40 A"/>
    <property type="chains" value="P=39-51"/>
</dbReference>
<dbReference type="PDB" id="7NM1">
    <property type="method" value="X-ray"/>
    <property type="resolution" value="1.40 A"/>
    <property type="chains" value="P=39-51"/>
</dbReference>
<dbReference type="PDB" id="7NM3">
    <property type="method" value="X-ray"/>
    <property type="resolution" value="1.40 A"/>
    <property type="chains" value="P=39-51"/>
</dbReference>
<dbReference type="PDB" id="7NM9">
    <property type="method" value="X-ray"/>
    <property type="resolution" value="1.70 A"/>
    <property type="chains" value="P=39-51"/>
</dbReference>
<dbReference type="PDB" id="7NMH">
    <property type="method" value="X-ray"/>
    <property type="resolution" value="1.40 A"/>
    <property type="chains" value="P=39-51"/>
</dbReference>
<dbReference type="PDB" id="7NQP">
    <property type="method" value="X-ray"/>
    <property type="resolution" value="1.24 A"/>
    <property type="chains" value="P=39-51"/>
</dbReference>
<dbReference type="PDB" id="7NR7">
    <property type="method" value="X-ray"/>
    <property type="resolution" value="1.40 A"/>
    <property type="chains" value="P=39-51"/>
</dbReference>
<dbReference type="PDB" id="7NSV">
    <property type="method" value="X-ray"/>
    <property type="resolution" value="1.33 A"/>
    <property type="chains" value="P=39-51"/>
</dbReference>
<dbReference type="PDB" id="7NV4">
    <property type="method" value="X-ray"/>
    <property type="resolution" value="1.20 A"/>
    <property type="chains" value="P=39-51"/>
</dbReference>
<dbReference type="PDB" id="7NVI">
    <property type="method" value="X-ray"/>
    <property type="resolution" value="1.20 A"/>
    <property type="chains" value="P=39-51"/>
</dbReference>
<dbReference type="PDB" id="7NWS">
    <property type="method" value="X-ray"/>
    <property type="resolution" value="1.20 A"/>
    <property type="chains" value="P=39-51"/>
</dbReference>
<dbReference type="PDB" id="7NXS">
    <property type="method" value="X-ray"/>
    <property type="resolution" value="1.20 A"/>
    <property type="chains" value="P=39-51"/>
</dbReference>
<dbReference type="PDB" id="7NXT">
    <property type="method" value="X-ray"/>
    <property type="resolution" value="1.20 A"/>
    <property type="chains" value="P=39-51"/>
</dbReference>
<dbReference type="PDB" id="7NXW">
    <property type="method" value="X-ray"/>
    <property type="resolution" value="1.20 A"/>
    <property type="chains" value="P=39-51"/>
</dbReference>
<dbReference type="PDB" id="7NXY">
    <property type="method" value="X-ray"/>
    <property type="resolution" value="1.20 A"/>
    <property type="chains" value="P=39-51"/>
</dbReference>
<dbReference type="PDB" id="7NY4">
    <property type="method" value="X-ray"/>
    <property type="resolution" value="1.40 A"/>
    <property type="chains" value="P=39-51"/>
</dbReference>
<dbReference type="PDB" id="7NYE">
    <property type="method" value="X-ray"/>
    <property type="resolution" value="1.40 A"/>
    <property type="chains" value="P=39-51"/>
</dbReference>
<dbReference type="PDB" id="7NYF">
    <property type="method" value="X-ray"/>
    <property type="resolution" value="1.40 A"/>
    <property type="chains" value="P=39-51"/>
</dbReference>
<dbReference type="PDB" id="7NYG">
    <property type="method" value="X-ray"/>
    <property type="resolution" value="1.40 A"/>
    <property type="chains" value="P=39-51"/>
</dbReference>
<dbReference type="PDB" id="7NZ6">
    <property type="method" value="X-ray"/>
    <property type="resolution" value="1.40 A"/>
    <property type="chains" value="P=39-51"/>
</dbReference>
<dbReference type="PDB" id="7NZG">
    <property type="method" value="X-ray"/>
    <property type="resolution" value="1.40 A"/>
    <property type="chains" value="P=39-51"/>
</dbReference>
<dbReference type="PDB" id="7NZK">
    <property type="method" value="X-ray"/>
    <property type="resolution" value="1.40 A"/>
    <property type="chains" value="P=39-51"/>
</dbReference>
<dbReference type="PDB" id="7NZV">
    <property type="method" value="X-ray"/>
    <property type="resolution" value="1.40 A"/>
    <property type="chains" value="P=39-51"/>
</dbReference>
<dbReference type="PDB" id="7O34">
    <property type="method" value="X-ray"/>
    <property type="resolution" value="1.20 A"/>
    <property type="chains" value="P=39-51"/>
</dbReference>
<dbReference type="PDB" id="7O3A">
    <property type="method" value="X-ray"/>
    <property type="resolution" value="1.20 A"/>
    <property type="chains" value="P=39-51"/>
</dbReference>
<dbReference type="PDB" id="7O3F">
    <property type="method" value="X-ray"/>
    <property type="resolution" value="1.40 A"/>
    <property type="chains" value="P=39-51"/>
</dbReference>
<dbReference type="PDB" id="7O3P">
    <property type="method" value="X-ray"/>
    <property type="resolution" value="1.40 A"/>
    <property type="chains" value="P=39-51"/>
</dbReference>
<dbReference type="PDB" id="7O3Q">
    <property type="method" value="X-ray"/>
    <property type="resolution" value="1.80 A"/>
    <property type="chains" value="P=39-51"/>
</dbReference>
<dbReference type="PDB" id="7O3R">
    <property type="method" value="X-ray"/>
    <property type="resolution" value="1.80 A"/>
    <property type="chains" value="P=39-51"/>
</dbReference>
<dbReference type="PDB" id="7O3S">
    <property type="method" value="X-ray"/>
    <property type="resolution" value="2.00 A"/>
    <property type="chains" value="P=39-51"/>
</dbReference>
<dbReference type="PDB" id="7O57">
    <property type="method" value="X-ray"/>
    <property type="resolution" value="1.40 A"/>
    <property type="chains" value="P=39-51"/>
</dbReference>
<dbReference type="PDB" id="7O59">
    <property type="method" value="X-ray"/>
    <property type="resolution" value="1.20 A"/>
    <property type="chains" value="P=39-51"/>
</dbReference>
<dbReference type="PDB" id="7O5A">
    <property type="method" value="X-ray"/>
    <property type="resolution" value="1.80 A"/>
    <property type="chains" value="P=39-51"/>
</dbReference>
<dbReference type="PDB" id="7O5C">
    <property type="method" value="X-ray"/>
    <property type="resolution" value="1.80 A"/>
    <property type="chains" value="P=39-51"/>
</dbReference>
<dbReference type="PDB" id="7O5D">
    <property type="method" value="X-ray"/>
    <property type="resolution" value="1.80 A"/>
    <property type="chains" value="P=39-51"/>
</dbReference>
<dbReference type="PDB" id="7O5F">
    <property type="method" value="X-ray"/>
    <property type="resolution" value="1.80 A"/>
    <property type="chains" value="P=39-51"/>
</dbReference>
<dbReference type="PDB" id="7O5G">
    <property type="method" value="X-ray"/>
    <property type="resolution" value="1.80 A"/>
    <property type="chains" value="P=39-51"/>
</dbReference>
<dbReference type="PDB" id="7O5O">
    <property type="method" value="X-ray"/>
    <property type="resolution" value="1.80 A"/>
    <property type="chains" value="P=39-51"/>
</dbReference>
<dbReference type="PDB" id="7O5P">
    <property type="method" value="X-ray"/>
    <property type="resolution" value="1.80 A"/>
    <property type="chains" value="P=39-51"/>
</dbReference>
<dbReference type="PDB" id="7O5S">
    <property type="method" value="X-ray"/>
    <property type="resolution" value="1.80 A"/>
    <property type="chains" value="P=39-51"/>
</dbReference>
<dbReference type="PDB" id="7O5U">
    <property type="method" value="X-ray"/>
    <property type="resolution" value="1.80 A"/>
    <property type="chains" value="P=39-51"/>
</dbReference>
<dbReference type="PDB" id="7O5X">
    <property type="method" value="X-ray"/>
    <property type="resolution" value="1.80 A"/>
    <property type="chains" value="P=39-51"/>
</dbReference>
<dbReference type="PDB" id="7O6F">
    <property type="method" value="X-ray"/>
    <property type="resolution" value="2.00 A"/>
    <property type="chains" value="P=39-51"/>
</dbReference>
<dbReference type="PDB" id="7O6G">
    <property type="method" value="X-ray"/>
    <property type="resolution" value="1.80 A"/>
    <property type="chains" value="P=39-51"/>
</dbReference>
<dbReference type="PDB" id="7O6I">
    <property type="method" value="X-ray"/>
    <property type="resolution" value="1.80 A"/>
    <property type="chains" value="P=39-51"/>
</dbReference>
<dbReference type="PDB" id="7O6J">
    <property type="method" value="X-ray"/>
    <property type="resolution" value="1.40 A"/>
    <property type="chains" value="P=39-51"/>
</dbReference>
<dbReference type="PDB" id="7O6K">
    <property type="method" value="X-ray"/>
    <property type="resolution" value="1.40 A"/>
    <property type="chains" value="P=39-51"/>
</dbReference>
<dbReference type="PDB" id="7O6M">
    <property type="method" value="X-ray"/>
    <property type="resolution" value="1.40 A"/>
    <property type="chains" value="P=39-51"/>
</dbReference>
<dbReference type="PDB" id="7O6O">
    <property type="method" value="X-ray"/>
    <property type="resolution" value="1.40 A"/>
    <property type="chains" value="P=39-51"/>
</dbReference>
<dbReference type="PDBsum" id="1NFI"/>
<dbReference type="PDBsum" id="2LSP"/>
<dbReference type="PDBsum" id="2O61"/>
<dbReference type="PDBsum" id="3GUT"/>
<dbReference type="PDBsum" id="3QXY"/>
<dbReference type="PDBsum" id="3RC0"/>
<dbReference type="PDBsum" id="4KV1"/>
<dbReference type="PDBsum" id="4KV4"/>
<dbReference type="PDBsum" id="5U4K"/>
<dbReference type="PDBsum" id="5URN"/>
<dbReference type="PDBsum" id="6NV2"/>
<dbReference type="PDBsum" id="6QHL"/>
<dbReference type="PDBsum" id="6QHM"/>
<dbReference type="PDBsum" id="6YOW"/>
<dbReference type="PDBsum" id="6YOX"/>
<dbReference type="PDBsum" id="6YOY"/>
<dbReference type="PDBsum" id="6YP2"/>
<dbReference type="PDBsum" id="6YP3"/>
<dbReference type="PDBsum" id="6YP8"/>
<dbReference type="PDBsum" id="6YPL"/>
<dbReference type="PDBsum" id="6YPY"/>
<dbReference type="PDBsum" id="6YQ2"/>
<dbReference type="PDBsum" id="7BI3"/>
<dbReference type="PDBsum" id="7BIQ"/>
<dbReference type="PDBsum" id="7BIW"/>
<dbReference type="PDBsum" id="7BIY"/>
<dbReference type="PDBsum" id="7BJB"/>
<dbReference type="PDBsum" id="7BJF"/>
<dbReference type="PDBsum" id="7BJL"/>
<dbReference type="PDBsum" id="7BJW"/>
<dbReference type="PDBsum" id="7BKH"/>
<dbReference type="PDBsum" id="7LET"/>
<dbReference type="PDBsum" id="7LEU"/>
<dbReference type="PDBsum" id="7LF4"/>
<dbReference type="PDBsum" id="7NJ9"/>
<dbReference type="PDBsum" id="7NJB"/>
<dbReference type="PDBsum" id="7NK3"/>
<dbReference type="PDBsum" id="7NK5"/>
<dbReference type="PDBsum" id="7NLA"/>
<dbReference type="PDBsum" id="7NLE"/>
<dbReference type="PDBsum" id="7NM1"/>
<dbReference type="PDBsum" id="7NM3"/>
<dbReference type="PDBsum" id="7NM9"/>
<dbReference type="PDBsum" id="7NMH"/>
<dbReference type="PDBsum" id="7NQP"/>
<dbReference type="PDBsum" id="7NR7"/>
<dbReference type="PDBsum" id="7NSV"/>
<dbReference type="PDBsum" id="7NV4"/>
<dbReference type="PDBsum" id="7NVI"/>
<dbReference type="PDBsum" id="7NWS"/>
<dbReference type="PDBsum" id="7NXS"/>
<dbReference type="PDBsum" id="7NXT"/>
<dbReference type="PDBsum" id="7NXW"/>
<dbReference type="PDBsum" id="7NXY"/>
<dbReference type="PDBsum" id="7NY4"/>
<dbReference type="PDBsum" id="7NYE"/>
<dbReference type="PDBsum" id="7NYF"/>
<dbReference type="PDBsum" id="7NYG"/>
<dbReference type="PDBsum" id="7NZ6"/>
<dbReference type="PDBsum" id="7NZG"/>
<dbReference type="PDBsum" id="7NZK"/>
<dbReference type="PDBsum" id="7NZV"/>
<dbReference type="PDBsum" id="7O34"/>
<dbReference type="PDBsum" id="7O3A"/>
<dbReference type="PDBsum" id="7O3F"/>
<dbReference type="PDBsum" id="7O3P"/>
<dbReference type="PDBsum" id="7O3Q"/>
<dbReference type="PDBsum" id="7O3R"/>
<dbReference type="PDBsum" id="7O3S"/>
<dbReference type="PDBsum" id="7O57"/>
<dbReference type="PDBsum" id="7O59"/>
<dbReference type="PDBsum" id="7O5A"/>
<dbReference type="PDBsum" id="7O5C"/>
<dbReference type="PDBsum" id="7O5D"/>
<dbReference type="PDBsum" id="7O5F"/>
<dbReference type="PDBsum" id="7O5G"/>
<dbReference type="PDBsum" id="7O5O"/>
<dbReference type="PDBsum" id="7O5P"/>
<dbReference type="PDBsum" id="7O5S"/>
<dbReference type="PDBsum" id="7O5U"/>
<dbReference type="PDBsum" id="7O5X"/>
<dbReference type="PDBsum" id="7O6F"/>
<dbReference type="PDBsum" id="7O6G"/>
<dbReference type="PDBsum" id="7O6I"/>
<dbReference type="PDBsum" id="7O6J"/>
<dbReference type="PDBsum" id="7O6K"/>
<dbReference type="PDBsum" id="7O6M"/>
<dbReference type="PDBsum" id="7O6O"/>
<dbReference type="SMR" id="Q04206"/>
<dbReference type="BioGRID" id="111902">
    <property type="interactions" value="461"/>
</dbReference>
<dbReference type="ComplexPortal" id="CPX-5828">
    <property type="entry name" value="NF-kappaB DNA-binding transcription factor complex, p50/p65"/>
</dbReference>
<dbReference type="ComplexPortal" id="CPX-5829">
    <property type="entry name" value="NF-kappaB DNA-binding transcription factor complex, p52/p65"/>
</dbReference>
<dbReference type="ComplexPortal" id="CPX-5834">
    <property type="entry name" value="NF-kappaB DNA-binding transcription factor complex, p65/c-Rel"/>
</dbReference>
<dbReference type="ComplexPortal" id="CPX-5835">
    <property type="entry name" value="NF-kappaB DNA-binding transcription factor complex, p65/p65"/>
</dbReference>
<dbReference type="CORUM" id="Q04206"/>
<dbReference type="DIP" id="DIP-24238N"/>
<dbReference type="ELM" id="Q04206"/>
<dbReference type="FunCoup" id="Q04206">
    <property type="interactions" value="3417"/>
</dbReference>
<dbReference type="IntAct" id="Q04206">
    <property type="interactions" value="210"/>
</dbReference>
<dbReference type="MINT" id="Q04206"/>
<dbReference type="STRING" id="9606.ENSP00000384273"/>
<dbReference type="BindingDB" id="Q04206"/>
<dbReference type="ChEMBL" id="CHEMBL5533"/>
<dbReference type="DrugBank" id="DB01822">
    <property type="generic name" value="(4R,5R)-1,2-dithiane-4,5-diol"/>
</dbReference>
<dbReference type="DrugBank" id="DB08908">
    <property type="generic name" value="Dimethyl fumarate"/>
</dbReference>
<dbReference type="DrugBank" id="DB15010">
    <property type="generic name" value="Edasalonexent"/>
</dbReference>
<dbReference type="DrugBank" id="DB01296">
    <property type="generic name" value="Glucosamine"/>
</dbReference>
<dbReference type="DrugBank" id="DB17029">
    <property type="generic name" value="Go-6976"/>
</dbReference>
<dbReference type="DrugBank" id="DB06685">
    <property type="generic name" value="Laquinimod"/>
</dbReference>
<dbReference type="DrugBank" id="DB12843">
    <property type="generic name" value="Oleandrin"/>
</dbReference>
<dbReference type="DrugBank" id="DB13063">
    <property type="generic name" value="Parthenolide"/>
</dbReference>
<dbReference type="DrugBank" id="DB12058">
    <property type="generic name" value="Recoflavone"/>
</dbReference>
<dbReference type="DrugBank" id="DB15495">
    <property type="generic name" value="Rocaglamide"/>
</dbReference>
<dbReference type="DrugBank" id="DB14059">
    <property type="generic name" value="SC-236"/>
</dbReference>
<dbReference type="DrugBank" id="DB00795">
    <property type="generic name" value="Sulfasalazine"/>
</dbReference>
<dbReference type="DrugBank" id="DB18804">
    <property type="generic name" value="Tepilamide fumarate"/>
</dbReference>
<dbReference type="DrugBank" id="DB12025">
    <property type="generic name" value="Triptolide"/>
</dbReference>
<dbReference type="DrugBank" id="DB06439">
    <property type="generic name" value="Tyloxapol"/>
</dbReference>
<dbReference type="DrugBank" id="DB06235">
    <property type="generic name" value="Vadimezan"/>
</dbReference>
<dbReference type="DrugCentral" id="Q04206"/>
<dbReference type="GuidetoPHARMACOLOGY" id="3280"/>
<dbReference type="GlyCosmos" id="Q04206">
    <property type="glycosylation" value="7 sites, 2 glycans"/>
</dbReference>
<dbReference type="GlyGen" id="Q04206">
    <property type="glycosylation" value="13 sites, 2 O-linked glycans (10 sites)"/>
</dbReference>
<dbReference type="iPTMnet" id="Q04206"/>
<dbReference type="MetOSite" id="Q04206"/>
<dbReference type="PhosphoSitePlus" id="Q04206"/>
<dbReference type="SwissPalm" id="Q04206"/>
<dbReference type="BioMuta" id="RELA"/>
<dbReference type="DMDM" id="62906901"/>
<dbReference type="jPOST" id="Q04206"/>
<dbReference type="MassIVE" id="Q04206"/>
<dbReference type="PaxDb" id="9606-ENSP00000384273"/>
<dbReference type="PeptideAtlas" id="Q04206"/>
<dbReference type="ProteomicsDB" id="58236">
    <molecule id="Q04206-1"/>
</dbReference>
<dbReference type="ProteomicsDB" id="58237">
    <molecule id="Q04206-2"/>
</dbReference>
<dbReference type="ProteomicsDB" id="58238">
    <molecule id="Q04206-3"/>
</dbReference>
<dbReference type="ProteomicsDB" id="58239">
    <molecule id="Q04206-4"/>
</dbReference>
<dbReference type="Pumba" id="Q04206"/>
<dbReference type="Antibodypedia" id="3557">
    <property type="antibodies" value="3844 antibodies from 52 providers"/>
</dbReference>
<dbReference type="DNASU" id="5970"/>
<dbReference type="Ensembl" id="ENST00000308639.13">
    <molecule id="Q04206-4"/>
    <property type="protein sequence ID" value="ENSP00000311508.9"/>
    <property type="gene ID" value="ENSG00000173039.20"/>
</dbReference>
<dbReference type="Ensembl" id="ENST00000406246.8">
    <molecule id="Q04206-1"/>
    <property type="protein sequence ID" value="ENSP00000384273.3"/>
    <property type="gene ID" value="ENSG00000173039.20"/>
</dbReference>
<dbReference type="GeneID" id="5970"/>
<dbReference type="KEGG" id="hsa:5970"/>
<dbReference type="MANE-Select" id="ENST00000406246.8">
    <property type="protein sequence ID" value="ENSP00000384273.3"/>
    <property type="RefSeq nucleotide sequence ID" value="NM_021975.4"/>
    <property type="RefSeq protein sequence ID" value="NP_068810.3"/>
</dbReference>
<dbReference type="UCSC" id="uc001ofg.4">
    <molecule id="Q04206-1"/>
    <property type="organism name" value="human"/>
</dbReference>
<dbReference type="AGR" id="HGNC:9955"/>
<dbReference type="CTD" id="5970"/>
<dbReference type="DisGeNET" id="5970"/>
<dbReference type="GeneCards" id="RELA"/>
<dbReference type="HGNC" id="HGNC:9955">
    <property type="gene designation" value="RELA"/>
</dbReference>
<dbReference type="HPA" id="ENSG00000173039">
    <property type="expression patterns" value="Low tissue specificity"/>
</dbReference>
<dbReference type="MalaCards" id="RELA"/>
<dbReference type="MIM" id="164014">
    <property type="type" value="gene"/>
</dbReference>
<dbReference type="MIM" id="618287">
    <property type="type" value="phenotype"/>
</dbReference>
<dbReference type="neXtProt" id="NX_Q04206"/>
<dbReference type="OpenTargets" id="ENSG00000173039"/>
<dbReference type="Orphanet" id="596759">
    <property type="disease" value="Combined immunodeficiency due to RELA haploinsufficiency"/>
</dbReference>
<dbReference type="Orphanet" id="530792">
    <property type="disease" value="RELA fusion-positive ependymoma"/>
</dbReference>
<dbReference type="PharmGKB" id="PA296"/>
<dbReference type="VEuPathDB" id="HostDB:ENSG00000173039"/>
<dbReference type="eggNOG" id="ENOG502QT4Z">
    <property type="taxonomic scope" value="Eukaryota"/>
</dbReference>
<dbReference type="GeneTree" id="ENSGT00940000159867"/>
<dbReference type="InParanoid" id="Q04206"/>
<dbReference type="OMA" id="PVRVHMQ"/>
<dbReference type="OrthoDB" id="7881762at2759"/>
<dbReference type="PAN-GO" id="Q04206">
    <property type="GO annotations" value="9 GO annotations based on evolutionary models"/>
</dbReference>
<dbReference type="PhylomeDB" id="Q04206"/>
<dbReference type="TreeFam" id="TF325632"/>
<dbReference type="PathwayCommons" id="Q04206"/>
<dbReference type="Reactome" id="R-HSA-1169091">
    <property type="pathway name" value="Activation of NF-kappaB in B cells"/>
</dbReference>
<dbReference type="Reactome" id="R-HSA-1810476">
    <property type="pathway name" value="RIP-mediated NFkB activation via ZBP1"/>
</dbReference>
<dbReference type="Reactome" id="R-HSA-193692">
    <property type="pathway name" value="Regulated proteolysis of p75NTR"/>
</dbReference>
<dbReference type="Reactome" id="R-HSA-202424">
    <property type="pathway name" value="Downstream TCR signaling"/>
</dbReference>
<dbReference type="Reactome" id="R-HSA-209560">
    <property type="pathway name" value="NF-kB is activated and signals survival"/>
</dbReference>
<dbReference type="Reactome" id="R-HSA-2559582">
    <property type="pathway name" value="Senescence-Associated Secretory Phenotype (SASP)"/>
</dbReference>
<dbReference type="Reactome" id="R-HSA-2871837">
    <property type="pathway name" value="FCERI mediated NF-kB activation"/>
</dbReference>
<dbReference type="Reactome" id="R-HSA-3134963">
    <property type="pathway name" value="DEx/H-box helicases activate type I IFN and inflammatory cytokines production"/>
</dbReference>
<dbReference type="Reactome" id="R-HSA-3214841">
    <property type="pathway name" value="PKMTs methylate histone lysines"/>
</dbReference>
<dbReference type="Reactome" id="R-HSA-381340">
    <property type="pathway name" value="Transcriptional regulation of white adipocyte differentiation"/>
</dbReference>
<dbReference type="Reactome" id="R-HSA-445989">
    <property type="pathway name" value="TAK1-dependent IKK and NF-kappa-B activation"/>
</dbReference>
<dbReference type="Reactome" id="R-HSA-448706">
    <property type="pathway name" value="Interleukin-1 processing"/>
</dbReference>
<dbReference type="Reactome" id="R-HSA-4755510">
    <property type="pathway name" value="SUMOylation of immune response proteins"/>
</dbReference>
<dbReference type="Reactome" id="R-HSA-5603029">
    <property type="pathway name" value="IkBA variant leads to EDA-ID"/>
</dbReference>
<dbReference type="Reactome" id="R-HSA-5607761">
    <property type="pathway name" value="Dectin-1 mediated noncanonical NF-kB signaling"/>
</dbReference>
<dbReference type="Reactome" id="R-HSA-5607764">
    <property type="pathway name" value="CLEC7A (Dectin-1) signaling"/>
</dbReference>
<dbReference type="Reactome" id="R-HSA-5621575">
    <property type="pathway name" value="CD209 (DC-SIGN) signaling"/>
</dbReference>
<dbReference type="Reactome" id="R-HSA-5660668">
    <property type="pathway name" value="CLEC7A/inflammasome pathway"/>
</dbReference>
<dbReference type="Reactome" id="R-HSA-844456">
    <property type="pathway name" value="The NLRP3 inflammasome"/>
</dbReference>
<dbReference type="Reactome" id="R-HSA-8853884">
    <property type="pathway name" value="Transcriptional Regulation by VENTX"/>
</dbReference>
<dbReference type="Reactome" id="R-HSA-9020702">
    <property type="pathway name" value="Interleukin-1 signaling"/>
</dbReference>
<dbReference type="Reactome" id="R-HSA-933542">
    <property type="pathway name" value="TRAF6 mediated NF-kB activation"/>
</dbReference>
<dbReference type="Reactome" id="R-HSA-9660826">
    <property type="pathway name" value="Purinergic signaling in leishmaniasis infection"/>
</dbReference>
<dbReference type="Reactome" id="R-HSA-9692916">
    <property type="pathway name" value="SARS-CoV-1 activates/modulates innate immune responses"/>
</dbReference>
<dbReference type="Reactome" id="R-HSA-9818749">
    <property type="pathway name" value="Regulation of NFE2L2 gene expression"/>
</dbReference>
<dbReference type="Reactome" id="R-HSA-9860927">
    <property type="pathway name" value="Turbulent (oscillatory, disturbed) flow shear stress activates signaling by PIEZO1 and integrins in endothelial cells"/>
</dbReference>
<dbReference type="SABIO-RK" id="Q04206"/>
<dbReference type="SignaLink" id="Q04206"/>
<dbReference type="SIGNOR" id="Q04206"/>
<dbReference type="BioGRID-ORCS" id="5970">
    <property type="hits" value="133 hits in 1188 CRISPR screens"/>
</dbReference>
<dbReference type="CD-CODE" id="804901D1">
    <property type="entry name" value="Nuclear speckle"/>
</dbReference>
<dbReference type="ChiTaRS" id="RELA">
    <property type="organism name" value="human"/>
</dbReference>
<dbReference type="EvolutionaryTrace" id="Q04206"/>
<dbReference type="GeneWiki" id="RELA"/>
<dbReference type="GenomeRNAi" id="5970"/>
<dbReference type="Pharos" id="Q04206">
    <property type="development level" value="Tchem"/>
</dbReference>
<dbReference type="PRO" id="PR:Q04206"/>
<dbReference type="Proteomes" id="UP000005640">
    <property type="component" value="Chromosome 11"/>
</dbReference>
<dbReference type="RNAct" id="Q04206">
    <property type="molecule type" value="protein"/>
</dbReference>
<dbReference type="Bgee" id="ENSG00000173039">
    <property type="expression patterns" value="Expressed in mucosa of stomach and 203 other cell types or tissues"/>
</dbReference>
<dbReference type="ExpressionAtlas" id="Q04206">
    <property type="expression patterns" value="baseline and differential"/>
</dbReference>
<dbReference type="GO" id="GO:0000785">
    <property type="term" value="C:chromatin"/>
    <property type="evidence" value="ECO:0000314"/>
    <property type="project" value="ARUK-UCL"/>
</dbReference>
<dbReference type="GO" id="GO:0005737">
    <property type="term" value="C:cytoplasm"/>
    <property type="evidence" value="ECO:0000314"/>
    <property type="project" value="UniProtKB"/>
</dbReference>
<dbReference type="GO" id="GO:0005829">
    <property type="term" value="C:cytosol"/>
    <property type="evidence" value="ECO:0000314"/>
    <property type="project" value="HPA"/>
</dbReference>
<dbReference type="GO" id="GO:0098978">
    <property type="term" value="C:glutamatergic synapse"/>
    <property type="evidence" value="ECO:0000314"/>
    <property type="project" value="SynGO"/>
</dbReference>
<dbReference type="GO" id="GO:0071159">
    <property type="term" value="C:NF-kappaB complex"/>
    <property type="evidence" value="ECO:0000353"/>
    <property type="project" value="ComplexPortal"/>
</dbReference>
<dbReference type="GO" id="GO:0035525">
    <property type="term" value="C:NF-kappaB p50/p65 complex"/>
    <property type="evidence" value="ECO:0000314"/>
    <property type="project" value="CAFA"/>
</dbReference>
<dbReference type="GO" id="GO:0005654">
    <property type="term" value="C:nucleoplasm"/>
    <property type="evidence" value="ECO:0000304"/>
    <property type="project" value="Reactome"/>
</dbReference>
<dbReference type="GO" id="GO:0005634">
    <property type="term" value="C:nucleus"/>
    <property type="evidence" value="ECO:0000314"/>
    <property type="project" value="UniProtKB"/>
</dbReference>
<dbReference type="GO" id="GO:0005667">
    <property type="term" value="C:transcription regulator complex"/>
    <property type="evidence" value="ECO:0000314"/>
    <property type="project" value="UniProtKB"/>
</dbReference>
<dbReference type="GO" id="GO:0042805">
    <property type="term" value="F:actinin binding"/>
    <property type="evidence" value="ECO:0000353"/>
    <property type="project" value="UniProtKB"/>
</dbReference>
<dbReference type="GO" id="GO:0071532">
    <property type="term" value="F:ankyrin repeat binding"/>
    <property type="evidence" value="ECO:0007669"/>
    <property type="project" value="Ensembl"/>
</dbReference>
<dbReference type="GO" id="GO:0003682">
    <property type="term" value="F:chromatin binding"/>
    <property type="evidence" value="ECO:0000314"/>
    <property type="project" value="UniProtKB"/>
</dbReference>
<dbReference type="GO" id="GO:0031490">
    <property type="term" value="F:chromatin DNA binding"/>
    <property type="evidence" value="ECO:0000314"/>
    <property type="project" value="UniProtKB"/>
</dbReference>
<dbReference type="GO" id="GO:0003677">
    <property type="term" value="F:DNA binding"/>
    <property type="evidence" value="ECO:0000314"/>
    <property type="project" value="UniProtKB"/>
</dbReference>
<dbReference type="GO" id="GO:0001228">
    <property type="term" value="F:DNA-binding transcription activator activity, RNA polymerase II-specific"/>
    <property type="evidence" value="ECO:0000314"/>
    <property type="project" value="NTNU_SB"/>
</dbReference>
<dbReference type="GO" id="GO:0003700">
    <property type="term" value="F:DNA-binding transcription factor activity"/>
    <property type="evidence" value="ECO:0000314"/>
    <property type="project" value="UniProtKB"/>
</dbReference>
<dbReference type="GO" id="GO:0000981">
    <property type="term" value="F:DNA-binding transcription factor activity, RNA polymerase II-specific"/>
    <property type="evidence" value="ECO:0000314"/>
    <property type="project" value="UniProtKB"/>
</dbReference>
<dbReference type="GO" id="GO:0140297">
    <property type="term" value="F:DNA-binding transcription factor binding"/>
    <property type="evidence" value="ECO:0000353"/>
    <property type="project" value="BHF-UCL"/>
</dbReference>
<dbReference type="GO" id="GO:0001227">
    <property type="term" value="F:DNA-binding transcription repressor activity, RNA polymerase II-specific"/>
    <property type="evidence" value="ECO:0000314"/>
    <property type="project" value="NTNU_SB"/>
</dbReference>
<dbReference type="GO" id="GO:0140296">
    <property type="term" value="F:general transcription initiation factor binding"/>
    <property type="evidence" value="ECO:0000353"/>
    <property type="project" value="UniProtKB"/>
</dbReference>
<dbReference type="GO" id="GO:0042826">
    <property type="term" value="F:histone deacetylase binding"/>
    <property type="evidence" value="ECO:0000353"/>
    <property type="project" value="UniProtKB"/>
</dbReference>
<dbReference type="GO" id="GO:0042802">
    <property type="term" value="F:identical protein binding"/>
    <property type="evidence" value="ECO:0000314"/>
    <property type="project" value="UniProtKB"/>
</dbReference>
<dbReference type="GO" id="GO:0051059">
    <property type="term" value="F:NF-kappaB binding"/>
    <property type="evidence" value="ECO:0000353"/>
    <property type="project" value="UniProtKB"/>
</dbReference>
<dbReference type="GO" id="GO:0042277">
    <property type="term" value="F:peptide binding"/>
    <property type="evidence" value="ECO:0000353"/>
    <property type="project" value="CAFA"/>
</dbReference>
<dbReference type="GO" id="GO:0042301">
    <property type="term" value="F:phosphate ion binding"/>
    <property type="evidence" value="ECO:0000314"/>
    <property type="project" value="UniProtKB"/>
</dbReference>
<dbReference type="GO" id="GO:0042803">
    <property type="term" value="F:protein homodimerization activity"/>
    <property type="evidence" value="ECO:0000314"/>
    <property type="project" value="UniProtKB"/>
</dbReference>
<dbReference type="GO" id="GO:0019901">
    <property type="term" value="F:protein kinase binding"/>
    <property type="evidence" value="ECO:0000353"/>
    <property type="project" value="UniProtKB"/>
</dbReference>
<dbReference type="GO" id="GO:0044877">
    <property type="term" value="F:protein-containing complex binding"/>
    <property type="evidence" value="ECO:0007669"/>
    <property type="project" value="Ensembl"/>
</dbReference>
<dbReference type="GO" id="GO:0000978">
    <property type="term" value="F:RNA polymerase II cis-regulatory region sequence-specific DNA binding"/>
    <property type="evidence" value="ECO:0000314"/>
    <property type="project" value="NTNU_SB"/>
</dbReference>
<dbReference type="GO" id="GO:0000979">
    <property type="term" value="F:RNA polymerase II core promoter sequence-specific DNA binding"/>
    <property type="evidence" value="ECO:0000314"/>
    <property type="project" value="ARUK-UCL"/>
</dbReference>
<dbReference type="GO" id="GO:0000977">
    <property type="term" value="F:RNA polymerase II transcription regulatory region sequence-specific DNA binding"/>
    <property type="evidence" value="ECO:0000314"/>
    <property type="project" value="UniProtKB"/>
</dbReference>
<dbReference type="GO" id="GO:0000976">
    <property type="term" value="F:transcription cis-regulatory region binding"/>
    <property type="evidence" value="ECO:0000314"/>
    <property type="project" value="UniProtKB"/>
</dbReference>
<dbReference type="GO" id="GO:0001223">
    <property type="term" value="F:transcription coactivator binding"/>
    <property type="evidence" value="ECO:0000353"/>
    <property type="project" value="ARUK-UCL"/>
</dbReference>
<dbReference type="GO" id="GO:0031625">
    <property type="term" value="F:ubiquitin protein ligase binding"/>
    <property type="evidence" value="ECO:0000353"/>
    <property type="project" value="UniProtKB"/>
</dbReference>
<dbReference type="GO" id="GO:0009887">
    <property type="term" value="P:animal organ morphogenesis"/>
    <property type="evidence" value="ECO:0007669"/>
    <property type="project" value="Ensembl"/>
</dbReference>
<dbReference type="GO" id="GO:0140374">
    <property type="term" value="P:antiviral innate immune response"/>
    <property type="evidence" value="ECO:0000314"/>
    <property type="project" value="UniProt"/>
</dbReference>
<dbReference type="GO" id="GO:0007249">
    <property type="term" value="P:canonical NF-kappaB signal transduction"/>
    <property type="evidence" value="ECO:0000314"/>
    <property type="project" value="CAFA"/>
</dbReference>
<dbReference type="GO" id="GO:0006968">
    <property type="term" value="P:cellular defense response"/>
    <property type="evidence" value="ECO:0000303"/>
    <property type="project" value="UniProtKB"/>
</dbReference>
<dbReference type="GO" id="GO:1904385">
    <property type="term" value="P:cellular response to angiotensin"/>
    <property type="evidence" value="ECO:0000315"/>
    <property type="project" value="BHF-UCL"/>
</dbReference>
<dbReference type="GO" id="GO:0035729">
    <property type="term" value="P:cellular response to hepatocyte growth factor stimulus"/>
    <property type="evidence" value="ECO:0007669"/>
    <property type="project" value="Ensembl"/>
</dbReference>
<dbReference type="GO" id="GO:0070301">
    <property type="term" value="P:cellular response to hydrogen peroxide"/>
    <property type="evidence" value="ECO:0000314"/>
    <property type="project" value="UniProtKB"/>
</dbReference>
<dbReference type="GO" id="GO:0071347">
    <property type="term" value="P:cellular response to interleukin-1"/>
    <property type="evidence" value="ECO:0000314"/>
    <property type="project" value="UniProtKB"/>
</dbReference>
<dbReference type="GO" id="GO:0071354">
    <property type="term" value="P:cellular response to interleukin-6"/>
    <property type="evidence" value="ECO:0000315"/>
    <property type="project" value="BHF-UCL"/>
</dbReference>
<dbReference type="GO" id="GO:0071222">
    <property type="term" value="P:cellular response to lipopolysaccharide"/>
    <property type="evidence" value="ECO:0000315"/>
    <property type="project" value="ARUK-UCL"/>
</dbReference>
<dbReference type="GO" id="GO:0071223">
    <property type="term" value="P:cellular response to lipoteichoic acid"/>
    <property type="evidence" value="ECO:0000315"/>
    <property type="project" value="UniProtKB"/>
</dbReference>
<dbReference type="GO" id="GO:0071316">
    <property type="term" value="P:cellular response to nicotine"/>
    <property type="evidence" value="ECO:0000315"/>
    <property type="project" value="BHF-UCL"/>
</dbReference>
<dbReference type="GO" id="GO:0071224">
    <property type="term" value="P:cellular response to peptidoglycan"/>
    <property type="evidence" value="ECO:0000315"/>
    <property type="project" value="UniProtKB"/>
</dbReference>
<dbReference type="GO" id="GO:0071356">
    <property type="term" value="P:cellular response to tumor necrosis factor"/>
    <property type="evidence" value="ECO:0000314"/>
    <property type="project" value="UniProtKB"/>
</dbReference>
<dbReference type="GO" id="GO:0006325">
    <property type="term" value="P:chromatin organization"/>
    <property type="evidence" value="ECO:0007669"/>
    <property type="project" value="Ensembl"/>
</dbReference>
<dbReference type="GO" id="GO:0019221">
    <property type="term" value="P:cytokine-mediated signaling pathway"/>
    <property type="evidence" value="ECO:0000314"/>
    <property type="project" value="UniProtKB"/>
</dbReference>
<dbReference type="GO" id="GO:0002357">
    <property type="term" value="P:defense response to tumor cell"/>
    <property type="evidence" value="ECO:0000314"/>
    <property type="project" value="ARUK-UCL"/>
</dbReference>
<dbReference type="GO" id="GO:0051607">
    <property type="term" value="P:defense response to virus"/>
    <property type="evidence" value="ECO:0000303"/>
    <property type="project" value="UniProtKB"/>
</dbReference>
<dbReference type="GO" id="GO:0006351">
    <property type="term" value="P:DNA-templated transcription"/>
    <property type="evidence" value="ECO:0007669"/>
    <property type="project" value="Ensembl"/>
</dbReference>
<dbReference type="GO" id="GO:0001942">
    <property type="term" value="P:hair follicle development"/>
    <property type="evidence" value="ECO:0007669"/>
    <property type="project" value="Ensembl"/>
</dbReference>
<dbReference type="GO" id="GO:0006954">
    <property type="term" value="P:inflammatory response"/>
    <property type="evidence" value="ECO:0000314"/>
    <property type="project" value="UniProtKB"/>
</dbReference>
<dbReference type="GO" id="GO:0045087">
    <property type="term" value="P:innate immune response"/>
    <property type="evidence" value="ECO:0000318"/>
    <property type="project" value="GO_Central"/>
</dbReference>
<dbReference type="GO" id="GO:0070498">
    <property type="term" value="P:interleukin-1-mediated signaling pathway"/>
    <property type="evidence" value="ECO:0000316"/>
    <property type="project" value="BHF-UCL"/>
</dbReference>
<dbReference type="GO" id="GO:0035556">
    <property type="term" value="P:intracellular signal transduction"/>
    <property type="evidence" value="ECO:0000314"/>
    <property type="project" value="ARUK-UCL"/>
</dbReference>
<dbReference type="GO" id="GO:0001889">
    <property type="term" value="P:liver development"/>
    <property type="evidence" value="ECO:0007669"/>
    <property type="project" value="Ensembl"/>
</dbReference>
<dbReference type="GO" id="GO:0016525">
    <property type="term" value="P:negative regulation of angiogenesis"/>
    <property type="evidence" value="ECO:0000315"/>
    <property type="project" value="BHF-UCL"/>
</dbReference>
<dbReference type="GO" id="GO:0043066">
    <property type="term" value="P:negative regulation of apoptotic process"/>
    <property type="evidence" value="ECO:0000314"/>
    <property type="project" value="UniProtKB"/>
</dbReference>
<dbReference type="GO" id="GO:1900016">
    <property type="term" value="P:negative regulation of cytokine production involved in inflammatory response"/>
    <property type="evidence" value="ECO:0000314"/>
    <property type="project" value="UniProt"/>
</dbReference>
<dbReference type="GO" id="GO:0045892">
    <property type="term" value="P:negative regulation of DNA-templated transcription"/>
    <property type="evidence" value="ECO:0000314"/>
    <property type="project" value="UniProtKB"/>
</dbReference>
<dbReference type="GO" id="GO:2001237">
    <property type="term" value="P:negative regulation of extrinsic apoptotic signaling pathway"/>
    <property type="evidence" value="ECO:0000315"/>
    <property type="project" value="BHF-UCL"/>
</dbReference>
<dbReference type="GO" id="GO:0046627">
    <property type="term" value="P:negative regulation of insulin receptor signaling pathway"/>
    <property type="evidence" value="ECO:0007669"/>
    <property type="project" value="Ensembl"/>
</dbReference>
<dbReference type="GO" id="GO:1902894">
    <property type="term" value="P:negative regulation of miRNA transcription"/>
    <property type="evidence" value="ECO:0000315"/>
    <property type="project" value="BHF-UCL"/>
</dbReference>
<dbReference type="GO" id="GO:1901223">
    <property type="term" value="P:negative regulation of non-canonical NF-kappaB signal transduction"/>
    <property type="evidence" value="ECO:0000315"/>
    <property type="project" value="UniProtKB"/>
</dbReference>
<dbReference type="GO" id="GO:0042177">
    <property type="term" value="P:negative regulation of protein catabolic process"/>
    <property type="evidence" value="ECO:0007669"/>
    <property type="project" value="Ensembl"/>
</dbReference>
<dbReference type="GO" id="GO:0033234">
    <property type="term" value="P:negative regulation of protein sumoylation"/>
    <property type="evidence" value="ECO:0007669"/>
    <property type="project" value="Ensembl"/>
</dbReference>
<dbReference type="GO" id="GO:0000122">
    <property type="term" value="P:negative regulation of transcription by RNA polymerase II"/>
    <property type="evidence" value="ECO:0000314"/>
    <property type="project" value="NTNU_SB"/>
</dbReference>
<dbReference type="GO" id="GO:0007218">
    <property type="term" value="P:neuropeptide signaling pathway"/>
    <property type="evidence" value="ECO:0000316"/>
    <property type="project" value="ARUK-UCL"/>
</dbReference>
<dbReference type="GO" id="GO:0038061">
    <property type="term" value="P:non-canonical NF-kappaB signal transduction"/>
    <property type="evidence" value="ECO:0000314"/>
    <property type="project" value="UniProt"/>
</dbReference>
<dbReference type="GO" id="GO:0070431">
    <property type="term" value="P:nucleotide-binding oligomerization domain containing 2 signaling pathway"/>
    <property type="evidence" value="ECO:0000314"/>
    <property type="project" value="MGI"/>
</dbReference>
<dbReference type="GO" id="GO:1902004">
    <property type="term" value="P:positive regulation of amyloid-beta formation"/>
    <property type="evidence" value="ECO:0000250"/>
    <property type="project" value="ARUK-UCL"/>
</dbReference>
<dbReference type="GO" id="GO:0043123">
    <property type="term" value="P:positive regulation of canonical NF-kappaB signal transduction"/>
    <property type="evidence" value="ECO:0000270"/>
    <property type="project" value="UniProtKB"/>
</dbReference>
<dbReference type="GO" id="GO:0008284">
    <property type="term" value="P:positive regulation of cell population proliferation"/>
    <property type="evidence" value="ECO:0000314"/>
    <property type="project" value="UniProtKB"/>
</dbReference>
<dbReference type="GO" id="GO:0045893">
    <property type="term" value="P:positive regulation of DNA-templated transcription"/>
    <property type="evidence" value="ECO:0000314"/>
    <property type="project" value="UniProtKB"/>
</dbReference>
<dbReference type="GO" id="GO:0010628">
    <property type="term" value="P:positive regulation of gene expression"/>
    <property type="evidence" value="ECO:0000315"/>
    <property type="project" value="ARUK-UCL"/>
</dbReference>
<dbReference type="GO" id="GO:0032731">
    <property type="term" value="P:positive regulation of interleukin-1 beta production"/>
    <property type="evidence" value="ECO:0000314"/>
    <property type="project" value="ARUK-UCL"/>
</dbReference>
<dbReference type="GO" id="GO:0032735">
    <property type="term" value="P:positive regulation of interleukin-12 production"/>
    <property type="evidence" value="ECO:0007669"/>
    <property type="project" value="Ensembl"/>
</dbReference>
<dbReference type="GO" id="GO:0032755">
    <property type="term" value="P:positive regulation of interleukin-6 production"/>
    <property type="evidence" value="ECO:0000314"/>
    <property type="project" value="ARUK-UCL"/>
</dbReference>
<dbReference type="GO" id="GO:0032757">
    <property type="term" value="P:positive regulation of interleukin-8 production"/>
    <property type="evidence" value="ECO:0000314"/>
    <property type="project" value="ARUK-UCL"/>
</dbReference>
<dbReference type="GO" id="GO:1904996">
    <property type="term" value="P:positive regulation of leukocyte adhesion to vascular endothelial cell"/>
    <property type="evidence" value="ECO:0000315"/>
    <property type="project" value="ARUK-UCL"/>
</dbReference>
<dbReference type="GO" id="GO:2000630">
    <property type="term" value="P:positive regulation of miRNA metabolic process"/>
    <property type="evidence" value="ECO:0000315"/>
    <property type="project" value="BHF-UCL"/>
</dbReference>
<dbReference type="GO" id="GO:1902895">
    <property type="term" value="P:positive regulation of miRNA transcription"/>
    <property type="evidence" value="ECO:0000315"/>
    <property type="project" value="BHF-UCL"/>
</dbReference>
<dbReference type="GO" id="GO:0051092">
    <property type="term" value="P:positive regulation of NF-kappaB transcription factor activity"/>
    <property type="evidence" value="ECO:0000314"/>
    <property type="project" value="MGI"/>
</dbReference>
<dbReference type="GO" id="GO:1901224">
    <property type="term" value="P:positive regulation of non-canonical NF-kappaB signal transduction"/>
    <property type="evidence" value="ECO:0000315"/>
    <property type="project" value="CAFA"/>
</dbReference>
<dbReference type="GO" id="GO:0014040">
    <property type="term" value="P:positive regulation of Schwann cell differentiation"/>
    <property type="evidence" value="ECO:0007669"/>
    <property type="project" value="Ensembl"/>
</dbReference>
<dbReference type="GO" id="GO:0050862">
    <property type="term" value="P:positive regulation of T cell receptor signaling pathway"/>
    <property type="evidence" value="ECO:0000315"/>
    <property type="project" value="CAFA"/>
</dbReference>
<dbReference type="GO" id="GO:0045944">
    <property type="term" value="P:positive regulation of transcription by RNA polymerase II"/>
    <property type="evidence" value="ECO:0000314"/>
    <property type="project" value="UniProtKB"/>
</dbReference>
<dbReference type="GO" id="GO:0010575">
    <property type="term" value="P:positive regulation of vascular endothelial growth factor production"/>
    <property type="evidence" value="ECO:0000315"/>
    <property type="project" value="BHF-UCL"/>
</dbReference>
<dbReference type="GO" id="GO:0099527">
    <property type="term" value="P:postsynapse to nucleus signaling pathway"/>
    <property type="evidence" value="ECO:0000314"/>
    <property type="project" value="SynGO"/>
</dbReference>
<dbReference type="GO" id="GO:0038161">
    <property type="term" value="P:prolactin signaling pathway"/>
    <property type="evidence" value="ECO:0000315"/>
    <property type="project" value="BHF-UCL"/>
</dbReference>
<dbReference type="GO" id="GO:0030163">
    <property type="term" value="P:protein catabolic process"/>
    <property type="evidence" value="ECO:0007669"/>
    <property type="project" value="Ensembl"/>
</dbReference>
<dbReference type="GO" id="GO:0006355">
    <property type="term" value="P:regulation of DNA-templated transcription"/>
    <property type="evidence" value="ECO:0000315"/>
    <property type="project" value="CAFA"/>
</dbReference>
<dbReference type="GO" id="GO:0050727">
    <property type="term" value="P:regulation of inflammatory response"/>
    <property type="evidence" value="ECO:0000250"/>
    <property type="project" value="UniProtKB"/>
</dbReference>
<dbReference type="GO" id="GO:0006357">
    <property type="term" value="P:regulation of transcription by RNA polymerase II"/>
    <property type="evidence" value="ECO:0000314"/>
    <property type="project" value="UniProt"/>
</dbReference>
<dbReference type="GO" id="GO:0043200">
    <property type="term" value="P:response to amino acid"/>
    <property type="evidence" value="ECO:0007669"/>
    <property type="project" value="Ensembl"/>
</dbReference>
<dbReference type="GO" id="GO:0051591">
    <property type="term" value="P:response to cAMP"/>
    <property type="evidence" value="ECO:0007669"/>
    <property type="project" value="Ensembl"/>
</dbReference>
<dbReference type="GO" id="GO:0033590">
    <property type="term" value="P:response to cobalamin"/>
    <property type="evidence" value="ECO:0007669"/>
    <property type="project" value="Ensembl"/>
</dbReference>
<dbReference type="GO" id="GO:0034097">
    <property type="term" value="P:response to cytokine"/>
    <property type="evidence" value="ECO:0000318"/>
    <property type="project" value="GO_Central"/>
</dbReference>
<dbReference type="GO" id="GO:0045471">
    <property type="term" value="P:response to ethanol"/>
    <property type="evidence" value="ECO:0007669"/>
    <property type="project" value="Ensembl"/>
</dbReference>
<dbReference type="GO" id="GO:0032868">
    <property type="term" value="P:response to insulin"/>
    <property type="evidence" value="ECO:0007669"/>
    <property type="project" value="Ensembl"/>
</dbReference>
<dbReference type="GO" id="GO:0070555">
    <property type="term" value="P:response to interleukin-1"/>
    <property type="evidence" value="ECO:0000316"/>
    <property type="project" value="BHF-UCL"/>
</dbReference>
<dbReference type="GO" id="GO:0002931">
    <property type="term" value="P:response to ischemia"/>
    <property type="evidence" value="ECO:0007669"/>
    <property type="project" value="Ensembl"/>
</dbReference>
<dbReference type="GO" id="GO:0032495">
    <property type="term" value="P:response to muramyl dipeptide"/>
    <property type="evidence" value="ECO:0007669"/>
    <property type="project" value="Ensembl"/>
</dbReference>
<dbReference type="GO" id="GO:0035994">
    <property type="term" value="P:response to muscle stretch"/>
    <property type="evidence" value="ECO:0007669"/>
    <property type="project" value="Ensembl"/>
</dbReference>
<dbReference type="GO" id="GO:0032570">
    <property type="term" value="P:response to progesterone"/>
    <property type="evidence" value="ECO:0007669"/>
    <property type="project" value="Ensembl"/>
</dbReference>
<dbReference type="GO" id="GO:0010224">
    <property type="term" value="P:response to UV-B"/>
    <property type="evidence" value="ECO:0000314"/>
    <property type="project" value="UniProtKB"/>
</dbReference>
<dbReference type="GO" id="GO:0009410">
    <property type="term" value="P:response to xenobiotic stimulus"/>
    <property type="evidence" value="ECO:0007669"/>
    <property type="project" value="Ensembl"/>
</dbReference>
<dbReference type="GO" id="GO:0023019">
    <property type="term" value="P:signal transduction involved in regulation of gene expression"/>
    <property type="evidence" value="ECO:0000314"/>
    <property type="project" value="UniProt"/>
</dbReference>
<dbReference type="GO" id="GO:0034142">
    <property type="term" value="P:toll-like receptor 4 signaling pathway"/>
    <property type="evidence" value="ECO:0000314"/>
    <property type="project" value="UniProt"/>
</dbReference>
<dbReference type="GO" id="GO:0038124">
    <property type="term" value="P:toll-like receptor TLR6:TLR2 signaling pathway"/>
    <property type="evidence" value="ECO:0000314"/>
    <property type="project" value="UniProt"/>
</dbReference>
<dbReference type="GO" id="GO:0033209">
    <property type="term" value="P:tumor necrosis factor-mediated signaling pathway"/>
    <property type="evidence" value="ECO:0000314"/>
    <property type="project" value="UniProtKB"/>
</dbReference>
<dbReference type="GO" id="GO:0038084">
    <property type="term" value="P:vascular endothelial growth factor signaling pathway"/>
    <property type="evidence" value="ECO:0000315"/>
    <property type="project" value="BHF-UCL"/>
</dbReference>
<dbReference type="CDD" id="cd01177">
    <property type="entry name" value="IPT_NFkappaB"/>
    <property type="match status" value="1"/>
</dbReference>
<dbReference type="CDD" id="cd07885">
    <property type="entry name" value="RHD-n_RelA"/>
    <property type="match status" value="1"/>
</dbReference>
<dbReference type="DisProt" id="DP00085"/>
<dbReference type="FunFam" id="2.60.40.340:FF:000003">
    <property type="entry name" value="NFkB p65 transcription factor"/>
    <property type="match status" value="1"/>
</dbReference>
<dbReference type="FunFam" id="2.60.40.10:FF:000046">
    <property type="entry name" value="Nuclear factor NF-kappa-B p105 subunit"/>
    <property type="match status" value="1"/>
</dbReference>
<dbReference type="Gene3D" id="2.60.40.10">
    <property type="entry name" value="Immunoglobulins"/>
    <property type="match status" value="1"/>
</dbReference>
<dbReference type="Gene3D" id="2.60.40.340">
    <property type="entry name" value="Rel homology domain (RHD), DNA-binding domain"/>
    <property type="match status" value="1"/>
</dbReference>
<dbReference type="IDEAL" id="IID00207"/>
<dbReference type="InterPro" id="IPR013783">
    <property type="entry name" value="Ig-like_fold"/>
</dbReference>
<dbReference type="InterPro" id="IPR014756">
    <property type="entry name" value="Ig_E-set"/>
</dbReference>
<dbReference type="InterPro" id="IPR002909">
    <property type="entry name" value="IPT_dom"/>
</dbReference>
<dbReference type="InterPro" id="IPR033926">
    <property type="entry name" value="IPT_NFkappaB"/>
</dbReference>
<dbReference type="InterPro" id="IPR000451">
    <property type="entry name" value="NFkB/Dor"/>
</dbReference>
<dbReference type="InterPro" id="IPR008967">
    <property type="entry name" value="p53-like_TF_DNA-bd_sf"/>
</dbReference>
<dbReference type="InterPro" id="IPR030495">
    <property type="entry name" value="RelA_RHD_N"/>
</dbReference>
<dbReference type="InterPro" id="IPR030492">
    <property type="entry name" value="RHD_CS"/>
</dbReference>
<dbReference type="InterPro" id="IPR032397">
    <property type="entry name" value="RHD_dimer"/>
</dbReference>
<dbReference type="InterPro" id="IPR011539">
    <property type="entry name" value="RHD_DNA_bind_dom"/>
</dbReference>
<dbReference type="InterPro" id="IPR037059">
    <property type="entry name" value="RHD_DNA_bind_dom_sf"/>
</dbReference>
<dbReference type="PANTHER" id="PTHR24169">
    <property type="entry name" value="NUCLEAR FACTOR NF-KAPPA-B PROTEIN"/>
    <property type="match status" value="1"/>
</dbReference>
<dbReference type="PANTHER" id="PTHR24169:SF1">
    <property type="entry name" value="TRANSCRIPTION FACTOR P65"/>
    <property type="match status" value="1"/>
</dbReference>
<dbReference type="Pfam" id="PF16179">
    <property type="entry name" value="RHD_dimer"/>
    <property type="match status" value="1"/>
</dbReference>
<dbReference type="Pfam" id="PF00554">
    <property type="entry name" value="RHD_DNA_bind"/>
    <property type="match status" value="1"/>
</dbReference>
<dbReference type="PRINTS" id="PR00057">
    <property type="entry name" value="NFKBTNSCPFCT"/>
</dbReference>
<dbReference type="SMART" id="SM00429">
    <property type="entry name" value="IPT"/>
    <property type="match status" value="1"/>
</dbReference>
<dbReference type="SUPFAM" id="SSF81296">
    <property type="entry name" value="E set domains"/>
    <property type="match status" value="1"/>
</dbReference>
<dbReference type="SUPFAM" id="SSF49417">
    <property type="entry name" value="p53-like transcription factors"/>
    <property type="match status" value="1"/>
</dbReference>
<dbReference type="PROSITE" id="PS01204">
    <property type="entry name" value="REL_1"/>
    <property type="match status" value="1"/>
</dbReference>
<dbReference type="PROSITE" id="PS50254">
    <property type="entry name" value="REL_2"/>
    <property type="match status" value="1"/>
</dbReference>